<organism>
    <name type="scientific">Homo sapiens</name>
    <name type="common">Human</name>
    <dbReference type="NCBI Taxonomy" id="9606"/>
    <lineage>
        <taxon>Eukaryota</taxon>
        <taxon>Metazoa</taxon>
        <taxon>Chordata</taxon>
        <taxon>Craniata</taxon>
        <taxon>Vertebrata</taxon>
        <taxon>Euteleostomi</taxon>
        <taxon>Mammalia</taxon>
        <taxon>Eutheria</taxon>
        <taxon>Euarchontoglires</taxon>
        <taxon>Primates</taxon>
        <taxon>Haplorrhini</taxon>
        <taxon>Catarrhini</taxon>
        <taxon>Hominidae</taxon>
        <taxon>Homo</taxon>
    </lineage>
</organism>
<name>CP2C8_HUMAN</name>
<feature type="chain" id="PRO_0000051699" description="Cytochrome P450 2C8">
    <location>
        <begin position="1"/>
        <end position="490"/>
    </location>
</feature>
<feature type="binding site">
    <location>
        <position position="100"/>
    </location>
    <ligand>
        <name>substrate</name>
    </ligand>
</feature>
<feature type="binding site">
    <location>
        <position position="204"/>
    </location>
    <ligand>
        <name>substrate</name>
    </ligand>
</feature>
<feature type="binding site">
    <location>
        <position position="241"/>
    </location>
    <ligand>
        <name>substrate</name>
    </ligand>
</feature>
<feature type="binding site" description="axial binding residue">
    <location>
        <position position="435"/>
    </location>
    <ligand>
        <name>heme</name>
        <dbReference type="ChEBI" id="CHEBI:30413"/>
    </ligand>
    <ligandPart>
        <name>Fe</name>
        <dbReference type="ChEBI" id="CHEBI:18248"/>
    </ligandPart>
</feature>
<feature type="modified residue" description="Phosphoserine" evidence="28">
    <location>
        <position position="100"/>
    </location>
</feature>
<feature type="splice variant" id="VSP_043306" description="In isoform 2." evidence="18">
    <original>MEPFVVLV</original>
    <variation>MFLQPIAK</variation>
    <location>
        <begin position="1"/>
        <end position="8"/>
    </location>
</feature>
<feature type="splice variant" id="VSP_043307" description="In isoform 2." evidence="18">
    <location>
        <begin position="9"/>
        <end position="110"/>
    </location>
</feature>
<feature type="sequence variant" id="VAR_012238" description="In allele CYP2C8*3; reduces enzymatic activity with paclitaxel as substrate; decreases intrinsic clearance of paclitaxel; reduces enzymatic activity with amodiaquine as substrate; dbSNP:rs11572080." evidence="2 3 5 7 12 13 17">
    <original>R</original>
    <variation>K</variation>
    <location>
        <position position="139"/>
    </location>
</feature>
<feature type="sequence variant" id="VAR_001250" evidence="14">
    <original>E</original>
    <variation>D</variation>
    <location>
        <position position="154"/>
    </location>
</feature>
<feature type="sequence variant" id="VAR_075541" description="In allele CYP2C8*6; no effect on affinity or enzymatic activity with paclitaxel as substrate; decreases affinity for amodiaquine; reduces enzymatic activity with amodiaquine as substrate; decreases intrinsic clearance of amodiaquine; dbSNP:rs142886225." evidence="12">
    <original>G</original>
    <variation>S</variation>
    <location>
        <position position="171"/>
    </location>
</feature>
<feature type="sequence variant" id="VAR_075542" description="In allele CYP2C8*8; increases affinity for paclitaxel; reduces enzymatic activity with paclitaxel as substrate; decreases intrinsic clearance of paclitaxel; reduces enzymatic activity with amodiaquine as substrate; decreases intrinsic clearance of amodiaquine; dbSNP:rs72558195." evidence="12">
    <original>R</original>
    <variation>G</variation>
    <location>
        <position position="186"/>
    </location>
</feature>
<feature type="sequence variant" id="VAR_001251" evidence="14">
    <original>N</original>
    <variation>K</variation>
    <location>
        <position position="193"/>
    </location>
</feature>
<feature type="sequence variant" id="VAR_075543" description="In allele CYP2C8*13; reduces enzymatic activity with paclitaxel as substrate; decreases intrinsic clearance of paclitaxel; reduces enzymatic activity with amodiaquine as substrate; decreases intrinsic clearance of amodiaquine; dbSNP:rs2134428602." evidence="12">
    <original>I</original>
    <variation>M</variation>
    <location>
        <position position="223"/>
    </location>
</feature>
<feature type="sequence variant" id="VAR_075544" description="In allele CYP2C8*14; reduces enzymatic activity with paclitaxel as substrate; decreases intrinsic clearance of paclitaxel; dbSNP:rs188934928." evidence="12">
    <original>A</original>
    <variation>P</variation>
    <location>
        <position position="238"/>
    </location>
</feature>
<feature type="sequence variant" id="VAR_018958" description="In dbSNP:rs11572102." evidence="17">
    <original>I</original>
    <variation>V</variation>
    <location>
        <position position="244"/>
    </location>
</feature>
<feature type="sequence variant" id="VAR_075545" description="In allele CYP2C8*9; increases enzymatic activity with paclitaxel as substrate; reduces enzymatic activity with amodiaquine as substrate; decreases intrinsic clearance of amodiaquine; dbSNP:rs769460274." evidence="12">
    <original>K</original>
    <variation>R</variation>
    <location>
        <position position="247"/>
    </location>
</feature>
<feature type="sequence variant" id="VAR_001252" evidence="14">
    <original>K</original>
    <variation>R</variation>
    <location>
        <position position="249"/>
    </location>
</feature>
<feature type="sequence variant" id="VAR_011754" description="In allele CYP2C8*4; reduces enzymatic activity with paclitaxel as substrate; decreases affinity for amodiaquine; dbSNP:rs1058930." evidence="3 7 10 12 15 17">
    <original>I</original>
    <variation>M</variation>
    <location>
        <position position="264"/>
    </location>
</feature>
<feature type="sequence variant" id="VAR_012239" description="In allele CYP2C8*2; only found in African-Americans; increases intrinsic clearance of paclitaxel; decreases affinity for amodiaquine; increases enzymatic activity with amodiaquine as substrate; dbSNP:rs11572103." evidence="2 3 7 12 17">
    <original>I</original>
    <variation>F</variation>
    <location>
        <position position="269"/>
    </location>
</feature>
<feature type="sequence variant" id="VAR_075546" description="In allele CYP2C8*10; reduces enzymatic activity with paclitaxel as substrate; reduces enzymatic activity with amodiaquine as substrate; decreases intrinsic clearance of amodiaquine; dbSNP:rs2134410323." evidence="12">
    <original>K</original>
    <variation>N</variation>
    <location>
        <position position="383"/>
    </location>
</feature>
<feature type="sequence variant" id="VAR_016947" description="In dbSNP:rs72558194." evidence="3">
    <original>L</original>
    <variation>S</variation>
    <location>
        <position position="390"/>
    </location>
</feature>
<feature type="sequence variant" id="VAR_012240" description="In allele CYP2C8*3; reduces enzymatic activity with paclitaxel as substrate; decreases intrinsic clearance of paclitaxel; reduces enzymatic activity with amodiaquine as substrate; dbSNP:rs10509681." evidence="2 3 5 7 11 12 17">
    <original>K</original>
    <variation>R</variation>
    <location>
        <position position="399"/>
    </location>
</feature>
<feature type="sequence variant" id="VAR_001253" evidence="14 16">
    <original>H</original>
    <variation>L</variation>
    <location>
        <position position="411"/>
    </location>
</feature>
<feature type="sequence variant" id="VAR_075547" description="In allele CYP2C8*12; increases enzymatic activity with paclitaxel as substrate; reduces enzymatic activity with amodiaquine as substrate; decreases intrinsic clearance of amodiaquine." evidence="12">
    <location>
        <position position="461"/>
    </location>
</feature>
<feature type="sequence conflict" description="In Ref. 12; no nucleotide entry." evidence="21" ref="12">
    <original>F</original>
    <variation>L</variation>
    <location>
        <position position="54"/>
    </location>
</feature>
<feature type="sequence conflict" description="In Ref. 12; no nucleotide entry." evidence="21" ref="12">
    <original>V</original>
    <variation>L</variation>
    <location>
        <position position="67"/>
    </location>
</feature>
<feature type="sequence conflict" description="In Ref. 12; no nucleotide entry." evidence="21" ref="12">
    <original>V</original>
    <variation>C</variation>
    <location>
        <position position="76"/>
    </location>
</feature>
<feature type="sequence conflict" description="In Ref. 8; AAH20596." evidence="21" ref="8">
    <original>A</original>
    <variation>S</variation>
    <location>
        <position position="82"/>
    </location>
</feature>
<feature type="sequence conflict" description="In Ref. 1; AAA35739/AAA35740 and 3; no nucleotide entry." evidence="21" ref="1 3">
    <original>T</original>
    <variation>N</variation>
    <location>
        <position position="130"/>
    </location>
</feature>
<feature type="sequence conflict" description="In Ref. 12; no nucleotide entry." evidence="21" ref="12">
    <original>N</original>
    <variation>S</variation>
    <location>
        <position position="209"/>
    </location>
</feature>
<feature type="sequence conflict" description="In Ref. 1; AAA35740." evidence="21" ref="1">
    <original>GTTIMALLTS</original>
    <variation>SFDNKIMLAA</variation>
    <location>
        <begin position="384"/>
        <end position="393"/>
    </location>
</feature>
<feature type="sequence conflict" description="In Ref. 4; BAF85442." evidence="21" ref="4">
    <original>T</original>
    <variation>A</variation>
    <location>
        <position position="386"/>
    </location>
</feature>
<feature type="turn" evidence="30">
    <location>
        <begin position="37"/>
        <end position="39"/>
    </location>
</feature>
<feature type="helix" evidence="30">
    <location>
        <begin position="42"/>
        <end position="44"/>
    </location>
</feature>
<feature type="strand" evidence="29">
    <location>
        <begin position="47"/>
        <end position="49"/>
    </location>
</feature>
<feature type="helix" evidence="30">
    <location>
        <begin position="50"/>
        <end position="61"/>
    </location>
</feature>
<feature type="strand" evidence="30">
    <location>
        <begin position="63"/>
        <end position="69"/>
    </location>
</feature>
<feature type="strand" evidence="30">
    <location>
        <begin position="72"/>
        <end position="77"/>
    </location>
</feature>
<feature type="helix" evidence="30">
    <location>
        <begin position="80"/>
        <end position="87"/>
    </location>
</feature>
<feature type="turn" evidence="30">
    <location>
        <begin position="88"/>
        <end position="94"/>
    </location>
</feature>
<feature type="helix" evidence="30">
    <location>
        <begin position="101"/>
        <end position="107"/>
    </location>
</feature>
<feature type="turn" evidence="30">
    <location>
        <begin position="111"/>
        <end position="113"/>
    </location>
</feature>
<feature type="helix" evidence="30">
    <location>
        <begin position="117"/>
        <end position="130"/>
    </location>
</feature>
<feature type="turn" evidence="30">
    <location>
        <begin position="133"/>
        <end position="136"/>
    </location>
</feature>
<feature type="strand" evidence="30">
    <location>
        <begin position="137"/>
        <end position="139"/>
    </location>
</feature>
<feature type="helix" evidence="30">
    <location>
        <begin position="141"/>
        <end position="157"/>
    </location>
</feature>
<feature type="turn" evidence="30">
    <location>
        <begin position="158"/>
        <end position="161"/>
    </location>
</feature>
<feature type="helix" evidence="30">
    <location>
        <begin position="167"/>
        <end position="182"/>
    </location>
</feature>
<feature type="strand" evidence="30">
    <location>
        <begin position="183"/>
        <end position="185"/>
    </location>
</feature>
<feature type="helix" evidence="30">
    <location>
        <begin position="192"/>
        <end position="208"/>
    </location>
</feature>
<feature type="helix" evidence="30">
    <location>
        <begin position="212"/>
        <end position="218"/>
    </location>
</feature>
<feature type="helix" evidence="30">
    <location>
        <begin position="220"/>
        <end position="225"/>
    </location>
</feature>
<feature type="helix" evidence="30">
    <location>
        <begin position="227"/>
        <end position="252"/>
    </location>
</feature>
<feature type="helix" evidence="30">
    <location>
        <begin position="263"/>
        <end position="273"/>
    </location>
</feature>
<feature type="helix" evidence="30">
    <location>
        <begin position="284"/>
        <end position="298"/>
    </location>
</feature>
<feature type="helix" evidence="30">
    <location>
        <begin position="300"/>
        <end position="315"/>
    </location>
</feature>
<feature type="helix" evidence="30">
    <location>
        <begin position="317"/>
        <end position="330"/>
    </location>
</feature>
<feature type="strand" evidence="30">
    <location>
        <begin position="333"/>
        <end position="335"/>
    </location>
</feature>
<feature type="helix" evidence="30">
    <location>
        <begin position="339"/>
        <end position="344"/>
    </location>
</feature>
<feature type="helix" evidence="30">
    <location>
        <begin position="346"/>
        <end position="359"/>
    </location>
</feature>
<feature type="strand" evidence="30">
    <location>
        <begin position="374"/>
        <end position="376"/>
    </location>
</feature>
<feature type="strand" evidence="30">
    <location>
        <begin position="379"/>
        <end position="381"/>
    </location>
</feature>
<feature type="strand" evidence="30">
    <location>
        <begin position="386"/>
        <end position="389"/>
    </location>
</feature>
<feature type="helix" evidence="30">
    <location>
        <begin position="391"/>
        <end position="395"/>
    </location>
</feature>
<feature type="turn" evidence="30">
    <location>
        <begin position="398"/>
        <end position="400"/>
    </location>
</feature>
<feature type="strand" evidence="30">
    <location>
        <begin position="401"/>
        <end position="403"/>
    </location>
</feature>
<feature type="helix" evidence="30">
    <location>
        <begin position="409"/>
        <end position="412"/>
    </location>
</feature>
<feature type="helix" evidence="30">
    <location>
        <begin position="431"/>
        <end position="433"/>
    </location>
</feature>
<feature type="helix" evidence="30">
    <location>
        <begin position="438"/>
        <end position="455"/>
    </location>
</feature>
<feature type="strand" evidence="30">
    <location>
        <begin position="456"/>
        <end position="459"/>
    </location>
</feature>
<feature type="helix" evidence="30">
    <location>
        <begin position="464"/>
        <end position="466"/>
    </location>
</feature>
<feature type="strand" evidence="30">
    <location>
        <begin position="472"/>
        <end position="479"/>
    </location>
</feature>
<feature type="strand" evidence="30">
    <location>
        <begin position="485"/>
        <end position="489"/>
    </location>
</feature>
<sequence length="490" mass="55825">MEPFVVLVLCLSFMLLFSLWRQSCRRRKLPPGPTPLPIIGNMLQIDVKDICKSFTNFSKVYGPVFTVYFGMNPIVVFHGYEAVKEALIDNGEEFSGRGNSPISQRITKGLGIISSNGKRWKEIRRFSLTTLRNFGMGKRSIEDRVQEEAHCLVEELRKTKASPCDPTFILGCAPCNVICSVVFQKRFDYKDQNFLTLMKRFNENFRILNSPWIQVCNNFPLLIDCFPGTHNKVLKNVALTRSYIREKVKEHQASLDVNNPRDFIDCFLIKMEQEKDNQKSEFNIENLVGTVADLFVAGTETTSTTLRYGLLLLLKHPEVTAKVQEEIDHVIGRHRSPCMQDRSHMPYTDAVVHEIQRYSDLVPTGVPHAVTTDTKFRNYLIPKGTTIMALLTSVLHDDKEFPNPNIFDPGHFLDKNGNFKKSDYFMPFSAGKRICAGEGLARMELFLFLTTILQNFNLKSVDDLKNLNTTAVTKGIVSLPPSYQICFIPV</sequence>
<evidence type="ECO:0000269" key="1">
    <source>
    </source>
</evidence>
<evidence type="ECO:0000269" key="2">
    <source>
    </source>
</evidence>
<evidence type="ECO:0000269" key="3">
    <source>
    </source>
</evidence>
<evidence type="ECO:0000269" key="4">
    <source>
    </source>
</evidence>
<evidence type="ECO:0000269" key="5">
    <source>
    </source>
</evidence>
<evidence type="ECO:0000269" key="6">
    <source>
    </source>
</evidence>
<evidence type="ECO:0000269" key="7">
    <source>
    </source>
</evidence>
<evidence type="ECO:0000269" key="8">
    <source>
    </source>
</evidence>
<evidence type="ECO:0000269" key="9">
    <source>
    </source>
</evidence>
<evidence type="ECO:0000269" key="10">
    <source>
    </source>
</evidence>
<evidence type="ECO:0000269" key="11">
    <source>
    </source>
</evidence>
<evidence type="ECO:0000269" key="12">
    <source>
    </source>
</evidence>
<evidence type="ECO:0000269" key="13">
    <source>
    </source>
</evidence>
<evidence type="ECO:0000269" key="14">
    <source>
    </source>
</evidence>
<evidence type="ECO:0000269" key="15">
    <source>
    </source>
</evidence>
<evidence type="ECO:0000269" key="16">
    <source>
    </source>
</evidence>
<evidence type="ECO:0000269" key="17">
    <source ref="5"/>
</evidence>
<evidence type="ECO:0000303" key="18">
    <source>
    </source>
</evidence>
<evidence type="ECO:0000303" key="19">
    <source>
    </source>
</evidence>
<evidence type="ECO:0000303" key="20">
    <source>
    </source>
</evidence>
<evidence type="ECO:0000305" key="21"/>
<evidence type="ECO:0000305" key="22">
    <source>
    </source>
</evidence>
<evidence type="ECO:0000305" key="23">
    <source>
    </source>
</evidence>
<evidence type="ECO:0000305" key="24">
    <source>
    </source>
</evidence>
<evidence type="ECO:0000305" key="25">
    <source>
    </source>
</evidence>
<evidence type="ECO:0000305" key="26">
    <source>
    </source>
</evidence>
<evidence type="ECO:0000312" key="27">
    <source>
        <dbReference type="HGNC" id="HGNC:2622"/>
    </source>
</evidence>
<evidence type="ECO:0007744" key="28">
    <source>
    </source>
</evidence>
<evidence type="ECO:0007829" key="29">
    <source>
        <dbReference type="PDB" id="1PQ2"/>
    </source>
</evidence>
<evidence type="ECO:0007829" key="30">
    <source>
        <dbReference type="PDB" id="2NNJ"/>
    </source>
</evidence>
<protein>
    <recommendedName>
        <fullName evidence="19">Cytochrome P450 2C8</fullName>
        <ecNumber evidence="1 4">1.14.14.1</ecNumber>
    </recommendedName>
    <alternativeName>
        <fullName>CYPIIC8</fullName>
    </alternativeName>
    <alternativeName>
        <fullName>Cytochrome P450 IIC2</fullName>
    </alternativeName>
    <alternativeName>
        <fullName>Cytochrome P450 MP-12</fullName>
    </alternativeName>
    <alternativeName>
        <fullName>Cytochrome P450 MP-20</fullName>
    </alternativeName>
    <alternativeName>
        <fullName>Cytochrome P450 form 1</fullName>
    </alternativeName>
    <alternativeName>
        <fullName>S-mephenytoin 4-hydroxylase</fullName>
    </alternativeName>
</protein>
<dbReference type="EC" id="1.14.14.1" evidence="1 4"/>
<dbReference type="EMBL" id="M17397">
    <property type="protein sequence ID" value="AAA35739.1"/>
    <property type="molecule type" value="mRNA"/>
</dbReference>
<dbReference type="EMBL" id="M17398">
    <property type="protein sequence ID" value="AAA35740.1"/>
    <property type="molecule type" value="mRNA"/>
</dbReference>
<dbReference type="EMBL" id="Y00498">
    <property type="protein sequence ID" value="CAA68550.1"/>
    <property type="molecule type" value="mRNA"/>
</dbReference>
<dbReference type="EMBL" id="AK292753">
    <property type="protein sequence ID" value="BAF85442.1"/>
    <property type="molecule type" value="mRNA"/>
</dbReference>
<dbReference type="EMBL" id="AK293328">
    <property type="protein sequence ID" value="BAH11492.1"/>
    <property type="molecule type" value="mRNA"/>
</dbReference>
<dbReference type="EMBL" id="AK315823">
    <property type="protein sequence ID" value="BAF98714.1"/>
    <property type="molecule type" value="mRNA"/>
</dbReference>
<dbReference type="EMBL" id="AY514490">
    <property type="protein sequence ID" value="AAR89907.1"/>
    <property type="molecule type" value="Genomic_DNA"/>
</dbReference>
<dbReference type="EMBL" id="AL359672">
    <property type="status" value="NOT_ANNOTATED_CDS"/>
    <property type="molecule type" value="Genomic_DNA"/>
</dbReference>
<dbReference type="EMBL" id="CH471066">
    <property type="protein sequence ID" value="EAW50018.1"/>
    <property type="molecule type" value="Genomic_DNA"/>
</dbReference>
<dbReference type="EMBL" id="BC020596">
    <property type="protein sequence ID" value="AAH20596.1"/>
    <property type="molecule type" value="mRNA"/>
</dbReference>
<dbReference type="EMBL" id="X54807">
    <property type="protein sequence ID" value="CAA38578.1"/>
    <property type="molecule type" value="Genomic_DNA"/>
</dbReference>
<dbReference type="EMBL" id="M21941">
    <property type="protein sequence ID" value="AAA52160.1"/>
    <property type="molecule type" value="mRNA"/>
</dbReference>
<dbReference type="EMBL" id="M21942">
    <property type="protein sequence ID" value="AAA52161.1"/>
    <property type="molecule type" value="mRNA"/>
</dbReference>
<dbReference type="EMBL" id="X51535">
    <property type="protein sequence ID" value="CAA35915.1"/>
    <property type="molecule type" value="mRNA"/>
</dbReference>
<dbReference type="CCDS" id="CCDS55721.1">
    <molecule id="P10632-2"/>
</dbReference>
<dbReference type="CCDS" id="CCDS7438.1">
    <molecule id="P10632-1"/>
</dbReference>
<dbReference type="PIR" id="A29782">
    <property type="entry name" value="A29782"/>
</dbReference>
<dbReference type="RefSeq" id="NP_000761.3">
    <molecule id="P10632-1"/>
    <property type="nucleotide sequence ID" value="NM_000770.3"/>
</dbReference>
<dbReference type="RefSeq" id="NP_001185782.1">
    <property type="nucleotide sequence ID" value="NM_001198853.1"/>
</dbReference>
<dbReference type="RefSeq" id="NP_001185783.1">
    <molecule id="P10632-2"/>
    <property type="nucleotide sequence ID" value="NM_001198854.1"/>
</dbReference>
<dbReference type="RefSeq" id="NP_001185784.1">
    <property type="nucleotide sequence ID" value="NM_001198855.1"/>
</dbReference>
<dbReference type="PDB" id="1PQ2">
    <property type="method" value="X-ray"/>
    <property type="resolution" value="2.70 A"/>
    <property type="chains" value="A/B=19-490"/>
</dbReference>
<dbReference type="PDB" id="2NNH">
    <property type="method" value="X-ray"/>
    <property type="resolution" value="2.60 A"/>
    <property type="chains" value="A/B=28-490"/>
</dbReference>
<dbReference type="PDB" id="2NNI">
    <property type="method" value="X-ray"/>
    <property type="resolution" value="2.80 A"/>
    <property type="chains" value="A=28-490"/>
</dbReference>
<dbReference type="PDB" id="2NNJ">
    <property type="method" value="X-ray"/>
    <property type="resolution" value="2.28 A"/>
    <property type="chains" value="A=28-490"/>
</dbReference>
<dbReference type="PDB" id="2VN0">
    <property type="method" value="X-ray"/>
    <property type="resolution" value="2.70 A"/>
    <property type="chains" value="A=28-490"/>
</dbReference>
<dbReference type="PDBsum" id="1PQ2"/>
<dbReference type="PDBsum" id="2NNH"/>
<dbReference type="PDBsum" id="2NNI"/>
<dbReference type="PDBsum" id="2NNJ"/>
<dbReference type="PDBsum" id="2VN0"/>
<dbReference type="SMR" id="P10632"/>
<dbReference type="BioGRID" id="107936">
    <property type="interactions" value="19"/>
</dbReference>
<dbReference type="FunCoup" id="P10632">
    <property type="interactions" value="319"/>
</dbReference>
<dbReference type="IntAct" id="P10632">
    <property type="interactions" value="15"/>
</dbReference>
<dbReference type="STRING" id="9606.ENSP00000360317"/>
<dbReference type="BindingDB" id="P10632"/>
<dbReference type="ChEMBL" id="CHEMBL3721"/>
<dbReference type="DrugBank" id="DB08607">
    <property type="generic name" value="(5R)-5-(4-{[(2R)-6-HYDROXY-2,5,7,8-TETRAMETHYL-3,4-DIHYDRO-2H-CHROMEN-2-YL]METHOXY}BENZYL)-1,3-THIAZOLIDINE-2,4-DIONE"/>
</dbReference>
<dbReference type="DrugBank" id="DB08496">
    <property type="generic name" value="(R)-warfarin"/>
</dbReference>
<dbReference type="DrugBank" id="DB14055">
    <property type="generic name" value="(S)-Warfarin"/>
</dbReference>
<dbReference type="DrugBank" id="DB12001">
    <property type="generic name" value="Abemaciclib"/>
</dbReference>
<dbReference type="DrugBank" id="DB05812">
    <property type="generic name" value="Abiraterone"/>
</dbReference>
<dbReference type="DrugBank" id="DB15568">
    <property type="generic name" value="Adagrasib"/>
</dbReference>
<dbReference type="DrugBank" id="DB00918">
    <property type="generic name" value="Almotriptan"/>
</dbReference>
<dbReference type="DrugBank" id="DB12015">
    <property type="generic name" value="Alpelisib"/>
</dbReference>
<dbReference type="DrugBank" id="DB01424">
    <property type="generic name" value="Aminophenazone"/>
</dbReference>
<dbReference type="DrugBank" id="DB01118">
    <property type="generic name" value="Amiodarone"/>
</dbReference>
<dbReference type="DrugBank" id="DB00321">
    <property type="generic name" value="Amitriptyline"/>
</dbReference>
<dbReference type="DrugBank" id="DB00381">
    <property type="generic name" value="Amlodipine"/>
</dbReference>
<dbReference type="DrugBank" id="DB00613">
    <property type="generic name" value="Amodiaquine"/>
</dbReference>
<dbReference type="DrugBank" id="DB01060">
    <property type="generic name" value="Amoxicillin"/>
</dbReference>
<dbReference type="DrugBank" id="DB17449">
    <property type="generic name" value="Anacaulase"/>
</dbReference>
<dbReference type="DrugBank" id="DB01217">
    <property type="generic name" value="Anastrozole"/>
</dbReference>
<dbReference type="DrugBank" id="DB01435">
    <property type="generic name" value="Antipyrine"/>
</dbReference>
<dbReference type="DrugBank" id="DB11901">
    <property type="generic name" value="Apalutamide"/>
</dbReference>
<dbReference type="DrugBank" id="DB06605">
    <property type="generic name" value="Apixaban"/>
</dbReference>
<dbReference type="DrugBank" id="DB00714">
    <property type="generic name" value="Apomorphine"/>
</dbReference>
<dbReference type="DrugBank" id="DB15059">
    <property type="generic name" value="Aprocitentan"/>
</dbReference>
<dbReference type="DrugBank" id="DB01072">
    <property type="generic name" value="Atazanavir"/>
</dbReference>
<dbReference type="DrugBank" id="DB01076">
    <property type="generic name" value="Atorvastatin"/>
</dbReference>
<dbReference type="DrugBank" id="DB11995">
    <property type="generic name" value="Avatrombopag"/>
</dbReference>
<dbReference type="DrugBank" id="DB00972">
    <property type="generic name" value="Azelastine"/>
</dbReference>
<dbReference type="DrugBank" id="DB08822">
    <property type="generic name" value="Azilsartan medoxomil"/>
</dbReference>
<dbReference type="DrugBank" id="DB12781">
    <property type="generic name" value="Balaglitazone"/>
</dbReference>
<dbReference type="DrugBank" id="DB13997">
    <property type="generic name" value="Baloxavir marboxil"/>
</dbReference>
<dbReference type="DrugBank" id="DB05015">
    <property type="generic name" value="Belinostat"/>
</dbReference>
<dbReference type="DrugBank" id="DB16703">
    <property type="generic name" value="Belumosudil"/>
</dbReference>
<dbReference type="DrugBank" id="DB06770">
    <property type="generic name" value="Benzyl alcohol"/>
</dbReference>
<dbReference type="DrugBank" id="DB05229">
    <property type="generic name" value="Beraprost"/>
</dbReference>
<dbReference type="DrugBank" id="DB00443">
    <property type="generic name" value="Betamethasone"/>
</dbReference>
<dbReference type="DrugBank" id="DB12236">
    <property type="generic name" value="Bexagliflozin"/>
</dbReference>
<dbReference type="DrugBank" id="DB00307">
    <property type="generic name" value="Bexarotene"/>
</dbReference>
<dbReference type="DrugBank" id="DB01393">
    <property type="generic name" value="Bezafibrate"/>
</dbReference>
<dbReference type="DrugBank" id="DB13746">
    <property type="generic name" value="Bioallethrin"/>
</dbReference>
<dbReference type="DrugBank" id="DB16536">
    <property type="generic name" value="Birch bark extract"/>
</dbReference>
<dbReference type="DrugBank" id="DB06616">
    <property type="generic name" value="Bosutinib"/>
</dbReference>
<dbReference type="DrugBank" id="DB12267">
    <property type="generic name" value="Brigatinib"/>
</dbReference>
<dbReference type="DrugBank" id="DB12151">
    <property type="generic name" value="Brincidofovir"/>
</dbReference>
<dbReference type="DrugBank" id="DB01194">
    <property type="generic name" value="Brinzolamide"/>
</dbReference>
<dbReference type="DrugBank" id="DB01222">
    <property type="generic name" value="Budesonide"/>
</dbReference>
<dbReference type="DrugBank" id="DB00921">
    <property type="generic name" value="Buprenorphine"/>
</dbReference>
<dbReference type="DrugBank" id="DB06772">
    <property type="generic name" value="Cabazitaxel"/>
</dbReference>
<dbReference type="DrugBank" id="DB08875">
    <property type="generic name" value="Cabozantinib"/>
</dbReference>
<dbReference type="DrugBank" id="DB00201">
    <property type="generic name" value="Caffeine"/>
</dbReference>
<dbReference type="DrugBank" id="DB13919">
    <property type="generic name" value="Candesartan"/>
</dbReference>
<dbReference type="DrugBank" id="DB00796">
    <property type="generic name" value="Candesartan cilexetil"/>
</dbReference>
<dbReference type="DrugBank" id="DB09061">
    <property type="generic name" value="Cannabidiol"/>
</dbReference>
<dbReference type="DrugBank" id="DB08502">
    <property type="generic name" value="Capravirine"/>
</dbReference>
<dbReference type="DrugBank" id="DB00564">
    <property type="generic name" value="Carbamazepine"/>
</dbReference>
<dbReference type="DrugBank" id="DB00482">
    <property type="generic name" value="Celecoxib"/>
</dbReference>
<dbReference type="DrugBank" id="DB06119">
    <property type="generic name" value="Cenobamate"/>
</dbReference>
<dbReference type="DrugBank" id="DB00439">
    <property type="generic name" value="Cerivastatin"/>
</dbReference>
<dbReference type="DrugBank" id="DB00608">
    <property type="generic name" value="Chloroquine"/>
</dbReference>
<dbReference type="DrugBank" id="DB00169">
    <property type="generic name" value="Cholecalciferol"/>
</dbReference>
<dbReference type="DrugBank" id="DB09201">
    <property type="generic name" value="Ciglitazone"/>
</dbReference>
<dbReference type="DrugBank" id="DB00501">
    <property type="generic name" value="Cimetidine"/>
</dbReference>
<dbReference type="DrugBank" id="DB00604">
    <property type="generic name" value="Cisapride"/>
</dbReference>
<dbReference type="DrugBank" id="DB12499">
    <property type="generic name" value="Clascoterone"/>
</dbReference>
<dbReference type="DrugBank" id="DB00349">
    <property type="generic name" value="Clobazam"/>
</dbReference>
<dbReference type="DrugBank" id="DB00845">
    <property type="generic name" value="Clofazimine"/>
</dbReference>
<dbReference type="DrugBank" id="DB00758">
    <property type="generic name" value="Clopidogrel"/>
</dbReference>
<dbReference type="DrugBank" id="DB00257">
    <property type="generic name" value="Clotrimazole"/>
</dbReference>
<dbReference type="DrugBank" id="DB00363">
    <property type="generic name" value="Clozapine"/>
</dbReference>
<dbReference type="DrugBank" id="DB00907">
    <property type="generic name" value="Cocaine"/>
</dbReference>
<dbReference type="DrugBank" id="DB01394">
    <property type="generic name" value="Colchicine"/>
</dbReference>
<dbReference type="DrugBank" id="DB05219">
    <property type="generic name" value="Crisaborole"/>
</dbReference>
<dbReference type="DrugBank" id="DB00531">
    <property type="generic name" value="Cyclophosphamide"/>
</dbReference>
<dbReference type="DrugBank" id="DB08912">
    <property type="generic name" value="Dabrafenib"/>
</dbReference>
<dbReference type="DrugBank" id="DB11682">
    <property type="generic name" value="Daprodustat"/>
</dbReference>
<dbReference type="DrugBank" id="DB00250">
    <property type="generic name" value="Dapsone"/>
</dbReference>
<dbReference type="DrugBank" id="DB09183">
    <property type="generic name" value="Dasabuvir"/>
</dbReference>
<dbReference type="DrugBank" id="DB01609">
    <property type="generic name" value="Deferasirox"/>
</dbReference>
<dbReference type="DrugBank" id="DB01234">
    <property type="generic name" value="Dexamethasone"/>
</dbReference>
<dbReference type="DrugBank" id="DB14649">
    <property type="generic name" value="Dexamethasone acetate"/>
</dbReference>
<dbReference type="DrugBank" id="DB09213">
    <property type="generic name" value="Dexibuprofen"/>
</dbReference>
<dbReference type="DrugBank" id="DB00829">
    <property type="generic name" value="Diazepam"/>
</dbReference>
<dbReference type="DrugBank" id="DB00586">
    <property type="generic name" value="Diclofenac"/>
</dbReference>
<dbReference type="DrugBank" id="DB00255">
    <property type="generic name" value="Diethylstilbestrol"/>
</dbReference>
<dbReference type="DrugBank" id="DB00343">
    <property type="generic name" value="Diltiazem"/>
</dbReference>
<dbReference type="DrugBank" id="DB01184">
    <property type="generic name" value="Domperidone"/>
</dbReference>
<dbReference type="DrugBank" id="DB00625">
    <property type="generic name" value="Efavirenz"/>
</dbReference>
<dbReference type="DrugBank" id="DB05187">
    <property type="generic name" value="Elafibranor"/>
</dbReference>
<dbReference type="DrugBank" id="DB11979">
    <property type="generic name" value="Elagolix"/>
</dbReference>
<dbReference type="DrugBank" id="DB15444">
    <property type="generic name" value="Elexacaftor"/>
</dbReference>
<dbReference type="DrugBank" id="DB06210">
    <property type="generic name" value="Eltrombopag"/>
</dbReference>
<dbReference type="DrugBank" id="DB13874">
    <property type="generic name" value="Enasidenib"/>
</dbReference>
<dbReference type="DrugBank" id="DB11718">
    <property type="generic name" value="Encorafenib"/>
</dbReference>
<dbReference type="DrugBank" id="DB08899">
    <property type="generic name" value="Enzalutamide"/>
</dbReference>
<dbReference type="DrugBank" id="DB00530">
    <property type="generic name" value="Erlotinib"/>
</dbReference>
<dbReference type="DrugBank" id="DB00783">
    <property type="generic name" value="Estradiol"/>
</dbReference>
<dbReference type="DrugBank" id="DB13952">
    <property type="generic name" value="Estradiol acetate"/>
</dbReference>
<dbReference type="DrugBank" id="DB13953">
    <property type="generic name" value="Estradiol benzoate"/>
</dbReference>
<dbReference type="DrugBank" id="DB13954">
    <property type="generic name" value="Estradiol cypionate"/>
</dbReference>
<dbReference type="DrugBank" id="DB13955">
    <property type="generic name" value="Estradiol dienanthate"/>
</dbReference>
<dbReference type="DrugBank" id="DB13956">
    <property type="generic name" value="Estradiol valerate"/>
</dbReference>
<dbReference type="DrugBank" id="DB00402">
    <property type="generic name" value="Eszopiclone"/>
</dbReference>
<dbReference type="DrugBank" id="DB00977">
    <property type="generic name" value="Ethinylestradiol"/>
</dbReference>
<dbReference type="DrugBank" id="DB14766">
    <property type="generic name" value="Etrasimod"/>
</dbReference>
<dbReference type="DrugBank" id="DB00973">
    <property type="generic name" value="Ezetimibe"/>
</dbReference>
<dbReference type="DrugBank" id="DB12466">
    <property type="generic name" value="Favipiravir"/>
</dbReference>
<dbReference type="DrugBank" id="DB04854">
    <property type="generic name" value="Febuxostat"/>
</dbReference>
<dbReference type="DrugBank" id="DB01023">
    <property type="generic name" value="Felodipine"/>
</dbReference>
<dbReference type="DrugBank" id="DB01039">
    <property type="generic name" value="Fenofibrate"/>
</dbReference>
<dbReference type="DrugBank" id="DB16165">
    <property type="generic name" value="Finerenone"/>
</dbReference>
<dbReference type="DrugBank" id="DB00544">
    <property type="generic name" value="Fluorouracil"/>
</dbReference>
<dbReference type="DrugBank" id="DB13867">
    <property type="generic name" value="Fluticasone"/>
</dbReference>
<dbReference type="DrugBank" id="DB08906">
    <property type="generic name" value="Fluticasone furoate"/>
</dbReference>
<dbReference type="DrugBank" id="DB00588">
    <property type="generic name" value="Fluticasone propionate"/>
</dbReference>
<dbReference type="DrugBank" id="DB01095">
    <property type="generic name" value="Fluvastatin"/>
</dbReference>
<dbReference type="DrugBank" id="DB11679">
    <property type="generic name" value="Fruquintinib"/>
</dbReference>
<dbReference type="DrugBank" id="DB01241">
    <property type="generic name" value="Gemfibrozil"/>
</dbReference>
<dbReference type="DrugBank" id="DB01645">
    <property type="generic name" value="Genistein"/>
</dbReference>
<dbReference type="DrugBank" id="DB11978">
    <property type="generic name" value="Glasdegib"/>
</dbReference>
<dbReference type="DrugBank" id="DB01218">
    <property type="generic name" value="Halofantrine"/>
</dbReference>
<dbReference type="DrugBank" id="DB00741">
    <property type="generic name" value="Hydrocortisone"/>
</dbReference>
<dbReference type="DrugBank" id="DB14538">
    <property type="generic name" value="Hydrocortisone aceponate"/>
</dbReference>
<dbReference type="DrugBank" id="DB14539">
    <property type="generic name" value="Hydrocortisone acetate"/>
</dbReference>
<dbReference type="DrugBank" id="DB14540">
    <property type="generic name" value="Hydrocortisone butyrate"/>
</dbReference>
<dbReference type="DrugBank" id="DB14541">
    <property type="generic name" value="Hydrocortisone cypionate"/>
</dbReference>
<dbReference type="DrugBank" id="DB14542">
    <property type="generic name" value="Hydrocortisone phosphate"/>
</dbReference>
<dbReference type="DrugBank" id="DB14543">
    <property type="generic name" value="Hydrocortisone probutate"/>
</dbReference>
<dbReference type="DrugBank" id="DB14545">
    <property type="generic name" value="Hydrocortisone succinate"/>
</dbReference>
<dbReference type="DrugBank" id="DB14544">
    <property type="generic name" value="Hydrocortisone valerate"/>
</dbReference>
<dbReference type="DrugBank" id="DB01611">
    <property type="generic name" value="Hydroxychloroquine"/>
</dbReference>
<dbReference type="DrugBank" id="DB12471">
    <property type="generic name" value="Ibrexafungerp"/>
</dbReference>
<dbReference type="DrugBank" id="DB01050">
    <property type="generic name" value="Ibuprofen"/>
</dbReference>
<dbReference type="DrugBank" id="DB09054">
    <property type="generic name" value="Idelalisib"/>
</dbReference>
<dbReference type="DrugBank" id="DB01181">
    <property type="generic name" value="Ifosfamide"/>
</dbReference>
<dbReference type="DrugBank" id="DB00619">
    <property type="generic name" value="Imatinib"/>
</dbReference>
<dbReference type="DrugBank" id="DB16200">
    <property type="generic name" value="Iptacopan"/>
</dbReference>
<dbReference type="DrugBank" id="DB01029">
    <property type="generic name" value="Irbesartan"/>
</dbReference>
<dbReference type="DrugBank" id="DB11633">
    <property type="generic name" value="Isavuconazole"/>
</dbReference>
<dbReference type="DrugBank" id="DB06636">
    <property type="generic name" value="Isavuconazonium"/>
</dbReference>
<dbReference type="DrugBank" id="DB00951">
    <property type="generic name" value="Isoniazid"/>
</dbReference>
<dbReference type="DrugBank" id="DB11757">
    <property type="generic name" value="Istradefylline"/>
</dbReference>
<dbReference type="DrugBank" id="DB14568">
    <property type="generic name" value="Ivosidenib"/>
</dbReference>
<dbReference type="DrugBank" id="DB09570">
    <property type="generic name" value="Ixazomib"/>
</dbReference>
<dbReference type="DrugBank" id="DB01221">
    <property type="generic name" value="Ketamine"/>
</dbReference>
<dbReference type="DrugBank" id="DB06738">
    <property type="generic name" value="Ketobemidone"/>
</dbReference>
<dbReference type="DrugBank" id="DB01026">
    <property type="generic name" value="Ketoconazole"/>
</dbReference>
<dbReference type="DrugBank" id="DB01009">
    <property type="generic name" value="Ketoprofen"/>
</dbReference>
<dbReference type="DrugBank" id="DB00465">
    <property type="generic name" value="Ketorolac"/>
</dbReference>
<dbReference type="DrugBank" id="DB00448">
    <property type="generic name" value="Lansoprazole"/>
</dbReference>
<dbReference type="DrugBank" id="DB01259">
    <property type="generic name" value="Lapatinib"/>
</dbReference>
<dbReference type="DrugBank" id="DB09078">
    <property type="generic name" value="Lenvatinib"/>
</dbReference>
<dbReference type="DrugBank" id="DB12070">
    <property type="generic name" value="Letermovir"/>
</dbReference>
<dbReference type="DrugBank" id="DB05667">
    <property type="generic name" value="Levoketoconazole"/>
</dbReference>
<dbReference type="DrugBank" id="DB08918">
    <property type="generic name" value="Levomilnacipran"/>
</dbReference>
<dbReference type="DrugBank" id="DB00451">
    <property type="generic name" value="Levothyroxine"/>
</dbReference>
<dbReference type="DrugBank" id="DB04725">
    <property type="generic name" value="Licofelone"/>
</dbReference>
<dbReference type="DrugBank" id="DB00281">
    <property type="generic name" value="Lidocaine"/>
</dbReference>
<dbReference type="DrugBank" id="DB17083">
    <property type="generic name" value="Linzagolix"/>
</dbReference>
<dbReference type="DrugBank" id="DB01583">
    <property type="generic name" value="Liotrix"/>
</dbReference>
<dbReference type="DrugBank" id="DB09198">
    <property type="generic name" value="Lobeglitazone"/>
</dbReference>
<dbReference type="DrugBank" id="DB06448">
    <property type="generic name" value="Lonafarnib"/>
</dbReference>
<dbReference type="DrugBank" id="DB00836">
    <property type="generic name" value="Loperamide"/>
</dbReference>
<dbReference type="DrugBank" id="DB00455">
    <property type="generic name" value="Loratadine"/>
</dbReference>
<dbReference type="DrugBank" id="DB12130">
    <property type="generic name" value="Lorlatinib"/>
</dbReference>
<dbReference type="DrugBank" id="DB00678">
    <property type="generic name" value="Losartan"/>
</dbReference>
<dbReference type="DrugBank" id="DB00227">
    <property type="generic name" value="Lovastatin"/>
</dbReference>
<dbReference type="DrugBank" id="DB09280">
    <property type="generic name" value="Lumacaftor"/>
</dbReference>
<dbReference type="DrugBank" id="DB15935">
    <property type="generic name" value="Lumasiran"/>
</dbReference>
<dbReference type="DrugBank" id="DB06077">
    <property type="generic name" value="Lumateperone"/>
</dbReference>
<dbReference type="DrugBank" id="DB08932">
    <property type="generic name" value="Macitentan"/>
</dbReference>
<dbReference type="DrugBank" id="DB14921">
    <property type="generic name" value="Mavacamten"/>
</dbReference>
<dbReference type="DrugBank" id="DB05501">
    <property type="generic name" value="Mavorixafor"/>
</dbReference>
<dbReference type="DrugBank" id="DB14009">
    <property type="generic name" value="Medical Cannabis"/>
</dbReference>
<dbReference type="DrugBank" id="DB00603">
    <property type="generic name" value="Medroxyprogesterone acetate"/>
</dbReference>
<dbReference type="DrugBank" id="DB00784">
    <property type="generic name" value="Mefenamic acid"/>
</dbReference>
<dbReference type="DrugBank" id="DB00814">
    <property type="generic name" value="Meloxicam"/>
</dbReference>
<dbReference type="DrugBank" id="DB00170">
    <property type="generic name" value="Menadione"/>
</dbReference>
<dbReference type="DrugBank" id="DB00532">
    <property type="generic name" value="Mephenytoin"/>
</dbReference>
<dbReference type="DrugBank" id="DB01357">
    <property type="generic name" value="Mestranol"/>
</dbReference>
<dbReference type="DrugBank" id="DB00333">
    <property type="generic name" value="Methadone"/>
</dbReference>
<dbReference type="DrugBank" id="DB09241">
    <property type="generic name" value="Methylene blue"/>
</dbReference>
<dbReference type="DrugBank" id="DB00959">
    <property type="generic name" value="Methylprednisolone"/>
</dbReference>
<dbReference type="DrugBank" id="DB00916">
    <property type="generic name" value="Metronidazole"/>
</dbReference>
<dbReference type="DrugBank" id="DB01110">
    <property type="generic name" value="Miconazole"/>
</dbReference>
<dbReference type="DrugBank" id="DB06595">
    <property type="generic name" value="Midostaurin"/>
</dbReference>
<dbReference type="DrugBank" id="DB00834">
    <property type="generic name" value="Mifepristone"/>
</dbReference>
<dbReference type="DrugBank" id="DB16236">
    <property type="generic name" value="Mitapivat"/>
</dbReference>
<dbReference type="DrugBank" id="DB11763">
    <property type="generic name" value="Momelotinib"/>
</dbReference>
<dbReference type="DrugBank" id="DB00764">
    <property type="generic name" value="Mometasone"/>
</dbReference>
<dbReference type="DrugBank" id="DB14512">
    <property type="generic name" value="Mometasone furoate"/>
</dbReference>
<dbReference type="DrugBank" id="DB00471">
    <property type="generic name" value="Montelukast"/>
</dbReference>
<dbReference type="DrugBank" id="DB00295">
    <property type="generic name" value="Morphine"/>
</dbReference>
<dbReference type="DrugBank" id="DB06510">
    <property type="generic name" value="Muraglitazar"/>
</dbReference>
<dbReference type="DrugBank" id="DB00688">
    <property type="generic name" value="Mycophenolate mofetil"/>
</dbReference>
<dbReference type="DrugBank" id="DB01024">
    <property type="generic name" value="Mycophenolic acid"/>
</dbReference>
<dbReference type="DrugBank" id="DB00486">
    <property type="generic name" value="Nabilone"/>
</dbReference>
<dbReference type="DrugBank" id="DB00788">
    <property type="generic name" value="Naproxen"/>
</dbReference>
<dbReference type="DrugBank" id="DB09199">
    <property type="generic name" value="Netoglitazone"/>
</dbReference>
<dbReference type="DrugBank" id="DB00622">
    <property type="generic name" value="Nicardipine"/>
</dbReference>
<dbReference type="DrugBank" id="DB00184">
    <property type="generic name" value="Nicotine"/>
</dbReference>
<dbReference type="DrugBank" id="DB01115">
    <property type="generic name" value="Nifedipine"/>
</dbReference>
<dbReference type="DrugBank" id="DB04868">
    <property type="generic name" value="Nilotinib"/>
</dbReference>
<dbReference type="DrugBank" id="DB06712">
    <property type="generic name" value="Nilvadipine"/>
</dbReference>
<dbReference type="DrugBank" id="DB12005">
    <property type="generic name" value="Nirogacestat"/>
</dbReference>
<dbReference type="DrugBank" id="DB06670">
    <property type="generic name" value="Odanacatib"/>
</dbReference>
<dbReference type="DrugBank" id="DB09080">
    <property type="generic name" value="Olodaterol"/>
</dbReference>
<dbReference type="DrugBank" id="DB16267">
    <property type="generic name" value="Olutasidenib"/>
</dbReference>
<dbReference type="DrugBank" id="DB12513">
    <property type="generic name" value="Omaveloxolone"/>
</dbReference>
<dbReference type="DrugBank" id="DB09296">
    <property type="generic name" value="Ombitasvir"/>
</dbReference>
<dbReference type="DrugBank" id="DB00338">
    <property type="generic name" value="Omeprazole"/>
</dbReference>
<dbReference type="DrugBank" id="DB11632">
    <property type="generic name" value="Opicapone"/>
</dbReference>
<dbReference type="DrugBank" id="DB01062">
    <property type="generic name" value="Oxybutynin"/>
</dbReference>
<dbReference type="DrugBank" id="DB12612">
    <property type="generic name" value="Ozanimod"/>
</dbReference>
<dbReference type="DrugBank" id="DB01229">
    <property type="generic name" value="Paclitaxel"/>
</dbReference>
<dbReference type="DrugBank" id="DB03796">
    <property type="generic name" value="Palmitic Acid"/>
</dbReference>
<dbReference type="DrugBank" id="DB05467">
    <property type="generic name" value="Palovarotene"/>
</dbReference>
<dbReference type="DrugBank" id="DB00617">
    <property type="generic name" value="Paramethadione"/>
</dbReference>
<dbReference type="DrugBank" id="DB06589">
    <property type="generic name" value="Pazopanib"/>
</dbReference>
<dbReference type="DrugBank" id="DB08922">
    <property type="generic name" value="Perospirone"/>
</dbReference>
<dbReference type="DrugBank" id="DB00850">
    <property type="generic name" value="Perphenazine"/>
</dbReference>
<dbReference type="DrugBank" id="DB00780">
    <property type="generic name" value="Phenelzine"/>
</dbReference>
<dbReference type="DrugBank" id="DB01174">
    <property type="generic name" value="Phenobarbital"/>
</dbReference>
<dbReference type="DrugBank" id="DB00946">
    <property type="generic name" value="Phenprocoumon"/>
</dbReference>
<dbReference type="DrugBank" id="DB00252">
    <property type="generic name" value="Phenytoin"/>
</dbReference>
<dbReference type="DrugBank" id="DB01132">
    <property type="generic name" value="Pioglitazone"/>
</dbReference>
<dbReference type="DrugBank" id="DB00554">
    <property type="generic name" value="Piroxicam"/>
</dbReference>
<dbReference type="DrugBank" id="DB17472">
    <property type="generic name" value="Pirtobrutinib"/>
</dbReference>
<dbReference type="DrugBank" id="DB08860">
    <property type="generic name" value="Pitavastatin"/>
</dbReference>
<dbReference type="DrugBank" id="DB08901">
    <property type="generic name" value="Ponatinib"/>
</dbReference>
<dbReference type="DrugBank" id="DB15822">
    <property type="generic name" value="Pralsetinib"/>
</dbReference>
<dbReference type="DrugBank" id="DB14631">
    <property type="generic name" value="Prednisolone phosphate"/>
</dbReference>
<dbReference type="DrugBank" id="DB00635">
    <property type="generic name" value="Prednisone"/>
</dbReference>
<dbReference type="DrugBank" id="DB01032">
    <property type="generic name" value="Probenecid"/>
</dbReference>
<dbReference type="DrugBank" id="DB00818">
    <property type="generic name" value="Propofol"/>
</dbReference>
<dbReference type="DrugBank" id="DB00205">
    <property type="generic name" value="Pyrimethamine"/>
</dbReference>
<dbReference type="DrugBank" id="DB04216">
    <property type="generic name" value="Quercetin"/>
</dbReference>
<dbReference type="DrugBank" id="DB00908">
    <property type="generic name" value="Quinidine"/>
</dbReference>
<dbReference type="DrugBank" id="DB00468">
    <property type="generic name" value="Quinine"/>
</dbReference>
<dbReference type="DrugBank" id="DB01129">
    <property type="generic name" value="Rabeprazole"/>
</dbReference>
<dbReference type="DrugBank" id="DB00481">
    <property type="generic name" value="Raloxifene"/>
</dbReference>
<dbReference type="DrugBank" id="DB08896">
    <property type="generic name" value="Regorafenib"/>
</dbReference>
<dbReference type="DrugBank" id="DB11853">
    <property type="generic name" value="Relugolix"/>
</dbReference>
<dbReference type="DrugBank" id="DB14761">
    <property type="generic name" value="Remdesivir"/>
</dbReference>
<dbReference type="DrugBank" id="DB00912">
    <property type="generic name" value="Repaglinide"/>
</dbReference>
<dbReference type="DrugBank" id="DB16826">
    <property type="generic name" value="Repotrectinib"/>
</dbReference>
<dbReference type="DrugBank" id="DB12914">
    <property type="generic name" value="Resmetirom"/>
</dbReference>
<dbReference type="DrugBank" id="DB18515">
    <property type="generic name" value="Revumenib"/>
</dbReference>
<dbReference type="DrugBank" id="DB00615">
    <property type="generic name" value="Rifabutin"/>
</dbReference>
<dbReference type="DrugBank" id="DB01045">
    <property type="generic name" value="Rifampin"/>
</dbReference>
<dbReference type="DrugBank" id="DB11753">
    <property type="generic name" value="Rifamycin"/>
</dbReference>
<dbReference type="DrugBank" id="DB01201">
    <property type="generic name" value="Rifapentine"/>
</dbReference>
<dbReference type="DrugBank" id="DB01220">
    <property type="generic name" value="Rifaximin"/>
</dbReference>
<dbReference type="DrugBank" id="DB08864">
    <property type="generic name" value="Rilpivirine"/>
</dbReference>
<dbReference type="DrugBank" id="DB08931">
    <property type="generic name" value="Riociguat"/>
</dbReference>
<dbReference type="DrugBank" id="DB14840">
    <property type="generic name" value="Ripretinib"/>
</dbReference>
<dbReference type="DrugBank" id="DB14924">
    <property type="generic name" value="Ritlecitinib"/>
</dbReference>
<dbReference type="DrugBank" id="DB00503">
    <property type="generic name" value="Ritonavir"/>
</dbReference>
<dbReference type="DrugBank" id="DB09200">
    <property type="generic name" value="Rivoglitazone"/>
</dbReference>
<dbReference type="DrugBank" id="DB00533">
    <property type="generic name" value="Rofecoxib"/>
</dbReference>
<dbReference type="DrugBank" id="DB00412">
    <property type="generic name" value="Rosiglitazone"/>
</dbReference>
<dbReference type="DrugBank" id="DB04847">
    <property type="generic name" value="Roxadustat"/>
</dbReference>
<dbReference type="DrugBank" id="DB12332">
    <property type="generic name" value="Rucaparib"/>
</dbReference>
<dbReference type="DrugBank" id="DB00938">
    <property type="generic name" value="Salmeterol"/>
</dbReference>
<dbReference type="DrugBank" id="DB12543">
    <property type="generic name" value="Samidorphan"/>
</dbReference>
<dbReference type="DrugBank" id="DB01232">
    <property type="generic name" value="Saquinavir"/>
</dbReference>
<dbReference type="DrugBank" id="DB00418">
    <property type="generic name" value="Secobarbital"/>
</dbReference>
<dbReference type="DrugBank" id="DB12390">
    <property type="generic name" value="Seladelpar"/>
</dbReference>
<dbReference type="DrugBank" id="DB01037">
    <property type="generic name" value="Selegiline"/>
</dbReference>
<dbReference type="DrugBank" id="DB11362">
    <property type="generic name" value="Selexipag"/>
</dbReference>
<dbReference type="DrugBank" id="DB15685">
    <property type="generic name" value="Selpercatinib"/>
</dbReference>
<dbReference type="DrugBank" id="DB11689">
    <property type="generic name" value="Selumetinib"/>
</dbReference>
<dbReference type="DrugBank" id="DB06739">
    <property type="generic name" value="Seratrodast"/>
</dbReference>
<dbReference type="DrugBank" id="DB00641">
    <property type="generic name" value="Simvastatin"/>
</dbReference>
<dbReference type="DrugBank" id="DB01261">
    <property type="generic name" value="Sitagliptin"/>
</dbReference>
<dbReference type="DrugBank" id="DB00398">
    <property type="generic name" value="Sorafenib"/>
</dbReference>
<dbReference type="DrugBank" id="DB15569">
    <property type="generic name" value="Sotorasib"/>
</dbReference>
<dbReference type="DrugBank" id="DB00421">
    <property type="generic name" value="Spironolactone"/>
</dbReference>
<dbReference type="DrugBank" id="DB09118">
    <property type="generic name" value="Stiripentol"/>
</dbReference>
<dbReference type="DrugBank" id="DB00359">
    <property type="generic name" value="Sulfadiazine"/>
</dbReference>
<dbReference type="DrugBank" id="DB06729">
    <property type="generic name" value="Sulfaphenazole"/>
</dbReference>
<dbReference type="DrugBank" id="DB01138">
    <property type="generic name" value="Sulfinpyrazone"/>
</dbReference>
<dbReference type="DrugBank" id="DB00675">
    <property type="generic name" value="Tamoxifen"/>
</dbReference>
<dbReference type="DrugBank" id="DB00799">
    <property type="generic name" value="Tazarotene"/>
</dbReference>
<dbReference type="DrugBank" id="DB12020">
    <property type="generic name" value="Tecovirimat"/>
</dbReference>
<dbReference type="DrugBank" id="DB09256">
    <property type="generic name" value="Tegafur"/>
</dbReference>
<dbReference type="DrugBank" id="DB01079">
    <property type="generic name" value="Tegaserod"/>
</dbReference>
<dbReference type="DrugBank" id="DB12095">
    <property type="generic name" value="Telotristat ethyl"/>
</dbReference>
<dbReference type="DrugBank" id="DB15133">
    <property type="generic name" value="Tepotinib"/>
</dbReference>
<dbReference type="DrugBank" id="DB00857">
    <property type="generic name" value="Terbinafine"/>
</dbReference>
<dbReference type="DrugBank" id="DB00342">
    <property type="generic name" value="Terfenadine"/>
</dbReference>
<dbReference type="DrugBank" id="DB08880">
    <property type="generic name" value="Teriflunomide"/>
</dbReference>
<dbReference type="DrugBank" id="DB00624">
    <property type="generic name" value="Testosterone"/>
</dbReference>
<dbReference type="DrugBank" id="DB13943">
    <property type="generic name" value="Testosterone cypionate"/>
</dbReference>
<dbReference type="DrugBank" id="DB13944">
    <property type="generic name" value="Testosterone enanthate"/>
</dbReference>
<dbReference type="DrugBank" id="DB13946">
    <property type="generic name" value="Testosterone undecanoate"/>
</dbReference>
<dbReference type="DrugBank" id="DB11712">
    <property type="generic name" value="Tezacaftor"/>
</dbReference>
<dbReference type="DrugBank" id="DB00208">
    <property type="generic name" value="Ticlopidine"/>
</dbReference>
<dbReference type="DrugBank" id="DB06137">
    <property type="generic name" value="Tirbanibulin"/>
</dbReference>
<dbReference type="DrugBank" id="DB01124">
    <property type="generic name" value="Tolbutamide"/>
</dbReference>
<dbReference type="DrugBank" id="DB01685">
    <property type="generic name" value="Topiroxostat"/>
</dbReference>
<dbReference type="DrugBank" id="DB00214">
    <property type="generic name" value="Torasemide"/>
</dbReference>
<dbReference type="DrugBank" id="DB15266">
    <property type="generic name" value="Tovorafenib"/>
</dbReference>
<dbReference type="DrugBank" id="DB08911">
    <property type="generic name" value="Trametinib"/>
</dbReference>
<dbReference type="DrugBank" id="DB00374">
    <property type="generic name" value="Treprostinil"/>
</dbReference>
<dbReference type="DrugBank" id="DB00755">
    <property type="generic name" value="Tretinoin"/>
</dbReference>
<dbReference type="DrugBank" id="DB00897">
    <property type="generic name" value="Triazolam"/>
</dbReference>
<dbReference type="DrugBank" id="DB12245">
    <property type="generic name" value="Triclabendazole"/>
</dbReference>
<dbReference type="DrugBank" id="DB12808">
    <property type="generic name" value="Trifarotene"/>
</dbReference>
<dbReference type="DrugBank" id="DB00347">
    <property type="generic name" value="Trimethadione"/>
</dbReference>
<dbReference type="DrugBank" id="DB00440">
    <property type="generic name" value="Trimethoprim"/>
</dbReference>
<dbReference type="DrugBank" id="DB00197">
    <property type="generic name" value="Troglitazone"/>
</dbReference>
<dbReference type="DrugBank" id="DB13179">
    <property type="generic name" value="Troleandomycin"/>
</dbReference>
<dbReference type="DrugBank" id="DB11652">
    <property type="generic name" value="Tucatinib"/>
</dbReference>
<dbReference type="DrugBank" id="DB15328">
    <property type="generic name" value="Ubrogepant"/>
</dbReference>
<dbReference type="DrugBank" id="DB12255">
    <property type="generic name" value="Vadadustat"/>
</dbReference>
<dbReference type="DrugBank" id="DB15114">
    <property type="generic name" value="Vamorolone"/>
</dbReference>
<dbReference type="DrugBank" id="DB00862">
    <property type="generic name" value="Vardenafil"/>
</dbReference>
<dbReference type="DrugBank" id="DB11613">
    <property type="generic name" value="Velpatasvir"/>
</dbReference>
<dbReference type="DrugBank" id="DB08881">
    <property type="generic name" value="Vemurafenib"/>
</dbReference>
<dbReference type="DrugBank" id="DB00661">
    <property type="generic name" value="Verapamil"/>
</dbReference>
<dbReference type="DrugBank" id="DB08828">
    <property type="generic name" value="Vismodegib"/>
</dbReference>
<dbReference type="DrugBank" id="DB17097">
    <property type="generic name" value="Vorasidenib"/>
</dbReference>
<dbReference type="DrugBank" id="DB09068">
    <property type="generic name" value="Vortioxetine"/>
</dbReference>
<dbReference type="DrugBank" id="DB12026">
    <property type="generic name" value="Voxilaprevir"/>
</dbReference>
<dbReference type="DrugBank" id="DB00682">
    <property type="generic name" value="Warfarin"/>
</dbReference>
<dbReference type="DrugBank" id="DB00549">
    <property type="generic name" value="Zafirlukast"/>
</dbReference>
<dbReference type="DrugBank" id="DB01198">
    <property type="generic name" value="Zopiclone"/>
</dbReference>
<dbReference type="DrugCentral" id="P10632"/>
<dbReference type="GuidetoPHARMACOLOGY" id="1325"/>
<dbReference type="SwissLipids" id="SLP:000001548"/>
<dbReference type="SwissLipids" id="SLP:000001616">
    <molecule id="P10632-1"/>
</dbReference>
<dbReference type="GlyGen" id="P10632">
    <property type="glycosylation" value="1 site"/>
</dbReference>
<dbReference type="iPTMnet" id="P10632"/>
<dbReference type="PhosphoSitePlus" id="P10632"/>
<dbReference type="BioMuta" id="CYP2C8"/>
<dbReference type="DMDM" id="117225"/>
<dbReference type="jPOST" id="P10632"/>
<dbReference type="MassIVE" id="P10632"/>
<dbReference type="PaxDb" id="9606-ENSP00000360317"/>
<dbReference type="PeptideAtlas" id="P10632"/>
<dbReference type="ProteomicsDB" id="52621">
    <molecule id="P10632-1"/>
</dbReference>
<dbReference type="ProteomicsDB" id="52622">
    <molecule id="P10632-2"/>
</dbReference>
<dbReference type="Antibodypedia" id="3013">
    <property type="antibodies" value="213 antibodies from 33 providers"/>
</dbReference>
<dbReference type="DNASU" id="1558"/>
<dbReference type="Ensembl" id="ENST00000371270.6">
    <molecule id="P10632-1"/>
    <property type="protein sequence ID" value="ENSP00000360317.3"/>
    <property type="gene ID" value="ENSG00000138115.15"/>
</dbReference>
<dbReference type="Ensembl" id="ENST00000535898.5">
    <molecule id="P10632-2"/>
    <property type="protein sequence ID" value="ENSP00000445062.1"/>
    <property type="gene ID" value="ENSG00000138115.15"/>
</dbReference>
<dbReference type="GeneID" id="1558"/>
<dbReference type="KEGG" id="hsa:1558"/>
<dbReference type="MANE-Select" id="ENST00000371270.6">
    <property type="protein sequence ID" value="ENSP00000360317.3"/>
    <property type="RefSeq nucleotide sequence ID" value="NM_000770.3"/>
    <property type="RefSeq protein sequence ID" value="NP_000761.3"/>
</dbReference>
<dbReference type="UCSC" id="uc001kkb.4">
    <molecule id="P10632-1"/>
    <property type="organism name" value="human"/>
</dbReference>
<dbReference type="AGR" id="HGNC:2622"/>
<dbReference type="CTD" id="1558"/>
<dbReference type="DisGeNET" id="1558"/>
<dbReference type="GeneCards" id="CYP2C8"/>
<dbReference type="HGNC" id="HGNC:2622">
    <property type="gene designation" value="CYP2C8"/>
</dbReference>
<dbReference type="HPA" id="ENSG00000138115">
    <property type="expression patterns" value="Tissue enriched (liver)"/>
</dbReference>
<dbReference type="MalaCards" id="CYP2C8"/>
<dbReference type="MIM" id="601129">
    <property type="type" value="gene"/>
</dbReference>
<dbReference type="MIM" id="618018">
    <property type="type" value="phenotype"/>
</dbReference>
<dbReference type="neXtProt" id="NX_P10632"/>
<dbReference type="OpenTargets" id="ENSG00000138115"/>
<dbReference type="PharmGKB" id="PA125"/>
<dbReference type="VEuPathDB" id="HostDB:ENSG00000138115"/>
<dbReference type="eggNOG" id="KOG0156">
    <property type="taxonomic scope" value="Eukaryota"/>
</dbReference>
<dbReference type="GeneTree" id="ENSGT00940000163696"/>
<dbReference type="HOGENOM" id="CLU_001570_22_2_1"/>
<dbReference type="InParanoid" id="P10632"/>
<dbReference type="OMA" id="VPHMNLA"/>
<dbReference type="OrthoDB" id="1103324at2759"/>
<dbReference type="PAN-GO" id="P10632">
    <property type="GO annotations" value="8 GO annotations based on evolutionary models"/>
</dbReference>
<dbReference type="PhylomeDB" id="P10632"/>
<dbReference type="TreeFam" id="TF352043"/>
<dbReference type="BRENDA" id="1.14.14.1">
    <property type="organism ID" value="2681"/>
</dbReference>
<dbReference type="PathwayCommons" id="P10632"/>
<dbReference type="Reactome" id="R-HSA-211981">
    <property type="pathway name" value="Xenobiotics"/>
</dbReference>
<dbReference type="Reactome" id="R-HSA-211999">
    <property type="pathway name" value="CYP2E1 reactions"/>
</dbReference>
<dbReference type="Reactome" id="R-HSA-2142670">
    <property type="pathway name" value="Synthesis of epoxy (EET) and dihydroxyeicosatrienoic acids (DHET)"/>
</dbReference>
<dbReference type="Reactome" id="R-HSA-2142816">
    <property type="pathway name" value="Synthesis of (16-20)-hydroxyeicosatetraenoic acids (HETE)"/>
</dbReference>
<dbReference type="Reactome" id="R-HSA-9027307">
    <property type="pathway name" value="Biosynthesis of maresin-like SPMs"/>
</dbReference>
<dbReference type="Reactome" id="R-HSA-9749641">
    <property type="pathway name" value="Aspirin ADME"/>
</dbReference>
<dbReference type="SABIO-RK" id="P10632"/>
<dbReference type="SignaLink" id="P10632"/>
<dbReference type="UniPathway" id="UPA00383"/>
<dbReference type="UniPathway" id="UPA00912"/>
<dbReference type="BioGRID-ORCS" id="1558">
    <property type="hits" value="12 hits in 1149 CRISPR screens"/>
</dbReference>
<dbReference type="ChiTaRS" id="CYP2C8">
    <property type="organism name" value="human"/>
</dbReference>
<dbReference type="EvolutionaryTrace" id="P10632"/>
<dbReference type="GeneWiki" id="CYP2C8"/>
<dbReference type="GenomeRNAi" id="1558"/>
<dbReference type="Pharos" id="P10632">
    <property type="development level" value="Tchem"/>
</dbReference>
<dbReference type="PRO" id="PR:P10632"/>
<dbReference type="Proteomes" id="UP000005640">
    <property type="component" value="Chromosome 10"/>
</dbReference>
<dbReference type="RNAct" id="P10632">
    <property type="molecule type" value="protein"/>
</dbReference>
<dbReference type="Bgee" id="ENSG00000138115">
    <property type="expression patterns" value="Expressed in right lobe of liver and 112 other cell types or tissues"/>
</dbReference>
<dbReference type="ExpressionAtlas" id="P10632">
    <property type="expression patterns" value="baseline and differential"/>
</dbReference>
<dbReference type="GO" id="GO:0005737">
    <property type="term" value="C:cytoplasm"/>
    <property type="evidence" value="ECO:0000318"/>
    <property type="project" value="GO_Central"/>
</dbReference>
<dbReference type="GO" id="GO:0005789">
    <property type="term" value="C:endoplasmic reticulum membrane"/>
    <property type="evidence" value="ECO:0000304"/>
    <property type="project" value="Reactome"/>
</dbReference>
<dbReference type="GO" id="GO:0043231">
    <property type="term" value="C:intracellular membrane-bounded organelle"/>
    <property type="evidence" value="ECO:0000314"/>
    <property type="project" value="HPA"/>
</dbReference>
<dbReference type="GO" id="GO:0005886">
    <property type="term" value="C:plasma membrane"/>
    <property type="evidence" value="ECO:0000314"/>
    <property type="project" value="HPA"/>
</dbReference>
<dbReference type="GO" id="GO:0008392">
    <property type="term" value="F:arachidonate epoxygenase activity"/>
    <property type="evidence" value="ECO:0000314"/>
    <property type="project" value="UniProtKB"/>
</dbReference>
<dbReference type="GO" id="GO:0034875">
    <property type="term" value="F:caffeine oxidase activity"/>
    <property type="evidence" value="ECO:0000314"/>
    <property type="project" value="BHF-UCL"/>
</dbReference>
<dbReference type="GO" id="GO:0101020">
    <property type="term" value="F:estrogen 16-alpha-hydroxylase activity"/>
    <property type="evidence" value="ECO:0000314"/>
    <property type="project" value="BHF-UCL"/>
</dbReference>
<dbReference type="GO" id="GO:0020037">
    <property type="term" value="F:heme binding"/>
    <property type="evidence" value="ECO:0000318"/>
    <property type="project" value="GO_Central"/>
</dbReference>
<dbReference type="GO" id="GO:0005506">
    <property type="term" value="F:iron ion binding"/>
    <property type="evidence" value="ECO:0007669"/>
    <property type="project" value="InterPro"/>
</dbReference>
<dbReference type="GO" id="GO:0004497">
    <property type="term" value="F:monooxygenase activity"/>
    <property type="evidence" value="ECO:0000314"/>
    <property type="project" value="UniProtKB"/>
</dbReference>
<dbReference type="GO" id="GO:0016712">
    <property type="term" value="F:oxidoreductase activity, acting on paired donors, with incorporation or reduction of molecular oxygen, reduced flavin or flavoprotein as one donor, and incorporation of one atom of oxygen"/>
    <property type="evidence" value="ECO:0000318"/>
    <property type="project" value="GO_Central"/>
</dbReference>
<dbReference type="GO" id="GO:0008401">
    <property type="term" value="F:retinoic acid 4-hydroxylase activity"/>
    <property type="evidence" value="ECO:0000314"/>
    <property type="project" value="UniProtKB"/>
</dbReference>
<dbReference type="GO" id="GO:0019373">
    <property type="term" value="P:epoxygenase P450 pathway"/>
    <property type="evidence" value="ECO:0000314"/>
    <property type="project" value="UniProtKB"/>
</dbReference>
<dbReference type="GO" id="GO:0008210">
    <property type="term" value="P:estrogen metabolic process"/>
    <property type="evidence" value="ECO:0000314"/>
    <property type="project" value="UniProtKB"/>
</dbReference>
<dbReference type="GO" id="GO:0046456">
    <property type="term" value="P:icosanoid biosynthetic process"/>
    <property type="evidence" value="ECO:0000314"/>
    <property type="project" value="UniProtKB"/>
</dbReference>
<dbReference type="GO" id="GO:0002933">
    <property type="term" value="P:lipid hydroxylation"/>
    <property type="evidence" value="ECO:0000314"/>
    <property type="project" value="BHF-UCL"/>
</dbReference>
<dbReference type="GO" id="GO:0042759">
    <property type="term" value="P:long-chain fatty acid biosynthetic process"/>
    <property type="evidence" value="ECO:0000304"/>
    <property type="project" value="Reactome"/>
</dbReference>
<dbReference type="GO" id="GO:0097267">
    <property type="term" value="P:omega-hydroxylase P450 pathway"/>
    <property type="evidence" value="ECO:0000304"/>
    <property type="project" value="Reactome"/>
</dbReference>
<dbReference type="GO" id="GO:0006082">
    <property type="term" value="P:organic acid metabolic process"/>
    <property type="evidence" value="ECO:0000314"/>
    <property type="project" value="BHF-UCL"/>
</dbReference>
<dbReference type="GO" id="GO:0070989">
    <property type="term" value="P:oxidative demethylation"/>
    <property type="evidence" value="ECO:0000314"/>
    <property type="project" value="BHF-UCL"/>
</dbReference>
<dbReference type="GO" id="GO:0042573">
    <property type="term" value="P:retinoic acid metabolic process"/>
    <property type="evidence" value="ECO:0000314"/>
    <property type="project" value="UniProtKB"/>
</dbReference>
<dbReference type="GO" id="GO:0042572">
    <property type="term" value="P:retinol metabolic process"/>
    <property type="evidence" value="ECO:0007669"/>
    <property type="project" value="UniProtKB-UniPathway"/>
</dbReference>
<dbReference type="GO" id="GO:0008202">
    <property type="term" value="P:steroid metabolic process"/>
    <property type="evidence" value="ECO:0000314"/>
    <property type="project" value="BHF-UCL"/>
</dbReference>
<dbReference type="GO" id="GO:0042178">
    <property type="term" value="P:xenobiotic catabolic process"/>
    <property type="evidence" value="ECO:0000314"/>
    <property type="project" value="BHF-UCL"/>
</dbReference>
<dbReference type="GO" id="GO:0006805">
    <property type="term" value="P:xenobiotic metabolic process"/>
    <property type="evidence" value="ECO:0000314"/>
    <property type="project" value="BHF-UCL"/>
</dbReference>
<dbReference type="CDD" id="cd20665">
    <property type="entry name" value="CYP2C-like"/>
    <property type="match status" value="1"/>
</dbReference>
<dbReference type="FunFam" id="1.10.630.10:FF:000299">
    <property type="entry name" value="Cytochrome P450 2C9"/>
    <property type="match status" value="1"/>
</dbReference>
<dbReference type="Gene3D" id="1.10.630.10">
    <property type="entry name" value="Cytochrome P450"/>
    <property type="match status" value="1"/>
</dbReference>
<dbReference type="InterPro" id="IPR001128">
    <property type="entry name" value="Cyt_P450"/>
</dbReference>
<dbReference type="InterPro" id="IPR017972">
    <property type="entry name" value="Cyt_P450_CS"/>
</dbReference>
<dbReference type="InterPro" id="IPR002401">
    <property type="entry name" value="Cyt_P450_E_grp-I"/>
</dbReference>
<dbReference type="InterPro" id="IPR036396">
    <property type="entry name" value="Cyt_P450_sf"/>
</dbReference>
<dbReference type="InterPro" id="IPR050182">
    <property type="entry name" value="Cytochrome_P450_fam2"/>
</dbReference>
<dbReference type="PANTHER" id="PTHR24300:SF317">
    <property type="entry name" value="CYTOCHROME P450 2C8"/>
    <property type="match status" value="1"/>
</dbReference>
<dbReference type="PANTHER" id="PTHR24300">
    <property type="entry name" value="CYTOCHROME P450 508A4-RELATED"/>
    <property type="match status" value="1"/>
</dbReference>
<dbReference type="Pfam" id="PF00067">
    <property type="entry name" value="p450"/>
    <property type="match status" value="1"/>
</dbReference>
<dbReference type="PRINTS" id="PR00463">
    <property type="entry name" value="EP450I"/>
</dbReference>
<dbReference type="PRINTS" id="PR00385">
    <property type="entry name" value="P450"/>
</dbReference>
<dbReference type="SUPFAM" id="SSF48264">
    <property type="entry name" value="Cytochrome P450"/>
    <property type="match status" value="1"/>
</dbReference>
<dbReference type="PROSITE" id="PS00086">
    <property type="entry name" value="CYTOCHROME_P450"/>
    <property type="match status" value="1"/>
</dbReference>
<comment type="function">
    <text evidence="1 4 8 9 12 16">A cytochrome P450 monooxygenase involved in the metabolism of various endogenous substrates, including fatty acids, steroid hormones and vitamins (PubMed:11093772, PubMed:14559847, PubMed:15766564, PubMed:19965576, PubMed:7574697). Mechanistically, uses molecular oxygen inserting one oxygen atom into a substrate, and reducing the second into a water molecule, with two electrons provided by NADPH via cytochrome P450 reductase (NADPH--hemoprotein reductase) (PubMed:11093772, PubMed:14559847, PubMed:15766564, PubMed:19965576, PubMed:7574697). Primarily catalyzes the epoxidation of double bonds of polyunsaturated fatty acids (PUFA) with a preference for the last double bond (PubMed:15766564, PubMed:19965576, PubMed:7574697). Catalyzes the hydroxylation of carbon-hydrogen bonds. Metabolizes all trans-retinoic acid toward its 4-hydroxylated form (PubMed:11093772). Displays 16-alpha hydroxylase activity toward estrogen steroid hormones, 17beta-estradiol (E2) and estrone (E1) (PubMed:14559847). Plays a role in the oxidative metabolism of xenobiotics. It is the principal enzyme responsible for the metabolism of the anti-cancer drug paclitaxel (taxol) (PubMed:26427316).</text>
</comment>
<comment type="catalytic activity">
    <reaction evidence="1 4">
        <text>an organic molecule + reduced [NADPH--hemoprotein reductase] + O2 = an alcohol + oxidized [NADPH--hemoprotein reductase] + H2O + H(+)</text>
        <dbReference type="Rhea" id="RHEA:17149"/>
        <dbReference type="Rhea" id="RHEA-COMP:11964"/>
        <dbReference type="Rhea" id="RHEA-COMP:11965"/>
        <dbReference type="ChEBI" id="CHEBI:15377"/>
        <dbReference type="ChEBI" id="CHEBI:15378"/>
        <dbReference type="ChEBI" id="CHEBI:15379"/>
        <dbReference type="ChEBI" id="CHEBI:30879"/>
        <dbReference type="ChEBI" id="CHEBI:57618"/>
        <dbReference type="ChEBI" id="CHEBI:58210"/>
        <dbReference type="ChEBI" id="CHEBI:142491"/>
        <dbReference type="EC" id="1.14.14.1"/>
    </reaction>
    <physiologicalReaction direction="left-to-right" evidence="22">
        <dbReference type="Rhea" id="RHEA:17150"/>
    </physiologicalReaction>
</comment>
<comment type="catalytic activity">
    <reaction evidence="16 24">
        <text>(5Z,8Z,11Z,14Z)-eicosatetraenoate + reduced [NADPH--hemoprotein reductase] + O2 = (11R,12S)-epoxy-(5Z,8Z,14Z)-eicosatrienoate + oxidized [NADPH--hemoprotein reductase] + H2O + H(+)</text>
        <dbReference type="Rhea" id="RHEA:49880"/>
        <dbReference type="Rhea" id="RHEA-COMP:11964"/>
        <dbReference type="Rhea" id="RHEA-COMP:11965"/>
        <dbReference type="ChEBI" id="CHEBI:15377"/>
        <dbReference type="ChEBI" id="CHEBI:15378"/>
        <dbReference type="ChEBI" id="CHEBI:15379"/>
        <dbReference type="ChEBI" id="CHEBI:32395"/>
        <dbReference type="ChEBI" id="CHEBI:57618"/>
        <dbReference type="ChEBI" id="CHEBI:58210"/>
        <dbReference type="ChEBI" id="CHEBI:131970"/>
    </reaction>
    <physiologicalReaction direction="left-to-right" evidence="26">
        <dbReference type="Rhea" id="RHEA:49881"/>
    </physiologicalReaction>
</comment>
<comment type="catalytic activity">
    <reaction evidence="16 24">
        <text>(5Z,8Z,11Z,14Z)-eicosatetraenoate + reduced [NADPH--hemoprotein reductase] + O2 = (11S,12R)-epoxy-(5Z,8Z,14Z)-eicosatrienoate + oxidized [NADPH--hemoprotein reductase] + H2O + H(+)</text>
        <dbReference type="Rhea" id="RHEA:49876"/>
        <dbReference type="Rhea" id="RHEA-COMP:11964"/>
        <dbReference type="Rhea" id="RHEA-COMP:11965"/>
        <dbReference type="ChEBI" id="CHEBI:15377"/>
        <dbReference type="ChEBI" id="CHEBI:15378"/>
        <dbReference type="ChEBI" id="CHEBI:15379"/>
        <dbReference type="ChEBI" id="CHEBI:32395"/>
        <dbReference type="ChEBI" id="CHEBI:57618"/>
        <dbReference type="ChEBI" id="CHEBI:58210"/>
        <dbReference type="ChEBI" id="CHEBI:131969"/>
    </reaction>
    <physiologicalReaction direction="left-to-right" evidence="26">
        <dbReference type="Rhea" id="RHEA:49877"/>
    </physiologicalReaction>
</comment>
<comment type="catalytic activity">
    <reaction evidence="9 16">
        <text>(5Z,8Z,11Z,14Z)-eicosatetraenoate + reduced [NADPH--hemoprotein reductase] + O2 = (14R,15S)-epoxy-(5Z,8Z,11Z)-eicosatrienoate + oxidized [NADPH--hemoprotein reductase] + H2O + H(+)</text>
        <dbReference type="Rhea" id="RHEA:49860"/>
        <dbReference type="Rhea" id="RHEA-COMP:11964"/>
        <dbReference type="Rhea" id="RHEA-COMP:11965"/>
        <dbReference type="ChEBI" id="CHEBI:15377"/>
        <dbReference type="ChEBI" id="CHEBI:15378"/>
        <dbReference type="ChEBI" id="CHEBI:15379"/>
        <dbReference type="ChEBI" id="CHEBI:32395"/>
        <dbReference type="ChEBI" id="CHEBI:57618"/>
        <dbReference type="ChEBI" id="CHEBI:58210"/>
        <dbReference type="ChEBI" id="CHEBI:131965"/>
    </reaction>
    <physiologicalReaction direction="left-to-right" evidence="25 26">
        <dbReference type="Rhea" id="RHEA:49861"/>
    </physiologicalReaction>
</comment>
<comment type="catalytic activity">
    <reaction evidence="9 16">
        <text>(5Z,8Z,11Z,14Z)-eicosatetraenoate + reduced [NADPH--hemoprotein reductase] + O2 = (14S,15R)-epoxy-(5Z,8Z,11Z)-eicosatrienoate + oxidized [NADPH--hemoprotein reductase] + H2O + H(+)</text>
        <dbReference type="Rhea" id="RHEA:49856"/>
        <dbReference type="Rhea" id="RHEA-COMP:11964"/>
        <dbReference type="Rhea" id="RHEA-COMP:11965"/>
        <dbReference type="ChEBI" id="CHEBI:15377"/>
        <dbReference type="ChEBI" id="CHEBI:15378"/>
        <dbReference type="ChEBI" id="CHEBI:15379"/>
        <dbReference type="ChEBI" id="CHEBI:32395"/>
        <dbReference type="ChEBI" id="CHEBI:57618"/>
        <dbReference type="ChEBI" id="CHEBI:58210"/>
        <dbReference type="ChEBI" id="CHEBI:131964"/>
    </reaction>
    <physiologicalReaction direction="left-to-right" evidence="25">
        <dbReference type="Rhea" id="RHEA:49857"/>
    </physiologicalReaction>
</comment>
<comment type="catalytic activity">
    <reaction evidence="8">
        <text>(5Z,8Z,11Z,14Z,17Z)-eicosapentaenoate + reduced [NADPH--hemoprotein reductase] + O2 = 11,12-epoxy-(5Z,8Z,14Z,17Z)-eicosatetraenoate + oxidized [NADPH--hemoprotein reductase] + H2O + H(+)</text>
        <dbReference type="Rhea" id="RHEA:52172"/>
        <dbReference type="Rhea" id="RHEA-COMP:11964"/>
        <dbReference type="Rhea" id="RHEA-COMP:11965"/>
        <dbReference type="ChEBI" id="CHEBI:15377"/>
        <dbReference type="ChEBI" id="CHEBI:15378"/>
        <dbReference type="ChEBI" id="CHEBI:15379"/>
        <dbReference type="ChEBI" id="CHEBI:57618"/>
        <dbReference type="ChEBI" id="CHEBI:58210"/>
        <dbReference type="ChEBI" id="CHEBI:58562"/>
        <dbReference type="ChEBI" id="CHEBI:136441"/>
    </reaction>
    <physiologicalReaction direction="left-to-right" evidence="24">
        <dbReference type="Rhea" id="RHEA:52173"/>
    </physiologicalReaction>
</comment>
<comment type="catalytic activity">
    <reaction evidence="8">
        <text>(5Z,8Z,11Z,14Z,17Z)-eicosapentaenoate + reduced [NADPH--hemoprotein reductase] + O2 = 14,15-epoxy-(5Z,8Z,11Z,17Z)-eicosatetraenoate + oxidized [NADPH--hemoprotein reductase] + H2O + H(+)</text>
        <dbReference type="Rhea" id="RHEA:52176"/>
        <dbReference type="Rhea" id="RHEA-COMP:11964"/>
        <dbReference type="Rhea" id="RHEA-COMP:11965"/>
        <dbReference type="ChEBI" id="CHEBI:15377"/>
        <dbReference type="ChEBI" id="CHEBI:15378"/>
        <dbReference type="ChEBI" id="CHEBI:15379"/>
        <dbReference type="ChEBI" id="CHEBI:57618"/>
        <dbReference type="ChEBI" id="CHEBI:58210"/>
        <dbReference type="ChEBI" id="CHEBI:58562"/>
        <dbReference type="ChEBI" id="CHEBI:136443"/>
    </reaction>
    <physiologicalReaction direction="left-to-right" evidence="24">
        <dbReference type="Rhea" id="RHEA:52177"/>
    </physiologicalReaction>
</comment>
<comment type="catalytic activity">
    <reaction evidence="9">
        <text>(5Z,8Z,11Z,14Z,17Z)-eicosapentaenoate + reduced [NADPH--hemoprotein reductase] + O2 = (17R,18S)-epoxy-(5Z,8Z,11Z,14Z)-eicosatetraenoate + oxidized [NADPH--hemoprotein reductase] + H2O + H(+)</text>
        <dbReference type="Rhea" id="RHEA:39779"/>
        <dbReference type="Rhea" id="RHEA-COMP:11964"/>
        <dbReference type="Rhea" id="RHEA-COMP:11965"/>
        <dbReference type="ChEBI" id="CHEBI:15377"/>
        <dbReference type="ChEBI" id="CHEBI:15378"/>
        <dbReference type="ChEBI" id="CHEBI:15379"/>
        <dbReference type="ChEBI" id="CHEBI:57618"/>
        <dbReference type="ChEBI" id="CHEBI:58210"/>
        <dbReference type="ChEBI" id="CHEBI:58562"/>
        <dbReference type="ChEBI" id="CHEBI:76634"/>
    </reaction>
    <physiologicalReaction direction="left-to-right" evidence="25">
        <dbReference type="Rhea" id="RHEA:39780"/>
    </physiologicalReaction>
</comment>
<comment type="catalytic activity">
    <reaction evidence="9">
        <text>(5Z,8Z,11Z,14Z,17Z)-eicosapentaenoate + reduced [NADPH--hemoprotein reductase] + O2 = (17S,18R)-epoxy-(5Z,8Z,11Z,14Z)-eicosatetraenoate + oxidized [NADPH--hemoprotein reductase] + H2O + H(+)</text>
        <dbReference type="Rhea" id="RHEA:39783"/>
        <dbReference type="Rhea" id="RHEA-COMP:11964"/>
        <dbReference type="Rhea" id="RHEA-COMP:11965"/>
        <dbReference type="ChEBI" id="CHEBI:15377"/>
        <dbReference type="ChEBI" id="CHEBI:15378"/>
        <dbReference type="ChEBI" id="CHEBI:15379"/>
        <dbReference type="ChEBI" id="CHEBI:57618"/>
        <dbReference type="ChEBI" id="CHEBI:58210"/>
        <dbReference type="ChEBI" id="CHEBI:58562"/>
        <dbReference type="ChEBI" id="CHEBI:76635"/>
    </reaction>
    <physiologicalReaction direction="left-to-right" evidence="25">
        <dbReference type="Rhea" id="RHEA:39784"/>
    </physiologicalReaction>
</comment>
<comment type="catalytic activity">
    <reaction evidence="9">
        <text>(4Z,7Z,10Z,13Z,16Z,19Z)-docosahexaenoate + reduced [NADPH--hemoprotein reductase] + O2 = (19R,20S)-epoxy-(4Z,7Z,10Z,13Z,16Z)-docosapentaenoate + oxidized [NADPH--hemoprotein reductase] + H2O + H(+)</text>
        <dbReference type="Rhea" id="RHEA:52120"/>
        <dbReference type="Rhea" id="RHEA-COMP:11964"/>
        <dbReference type="Rhea" id="RHEA-COMP:11965"/>
        <dbReference type="ChEBI" id="CHEBI:15377"/>
        <dbReference type="ChEBI" id="CHEBI:15378"/>
        <dbReference type="ChEBI" id="CHEBI:15379"/>
        <dbReference type="ChEBI" id="CHEBI:57618"/>
        <dbReference type="ChEBI" id="CHEBI:58210"/>
        <dbReference type="ChEBI" id="CHEBI:77016"/>
        <dbReference type="ChEBI" id="CHEBI:136410"/>
    </reaction>
    <physiologicalReaction direction="left-to-right" evidence="25">
        <dbReference type="Rhea" id="RHEA:52121"/>
    </physiologicalReaction>
</comment>
<comment type="catalytic activity">
    <reaction evidence="9">
        <text>(4Z,7Z,10Z,13Z,16Z,19Z)-docosahexaenoate + reduced [NADPH--hemoprotein reductase] + O2 = (19S,20R)-epoxy-(4Z,7Z,10Z,13Z,16Z)-docosapentaenoate + oxidized [NADPH--hemoprotein reductase] + H2O + H(+)</text>
        <dbReference type="Rhea" id="RHEA:52124"/>
        <dbReference type="Rhea" id="RHEA-COMP:11964"/>
        <dbReference type="Rhea" id="RHEA-COMP:11965"/>
        <dbReference type="ChEBI" id="CHEBI:15377"/>
        <dbReference type="ChEBI" id="CHEBI:15378"/>
        <dbReference type="ChEBI" id="CHEBI:15379"/>
        <dbReference type="ChEBI" id="CHEBI:57618"/>
        <dbReference type="ChEBI" id="CHEBI:58210"/>
        <dbReference type="ChEBI" id="CHEBI:77016"/>
        <dbReference type="ChEBI" id="CHEBI:136411"/>
    </reaction>
    <physiologicalReaction direction="left-to-right" evidence="25">
        <dbReference type="Rhea" id="RHEA:52125"/>
    </physiologicalReaction>
</comment>
<comment type="catalytic activity">
    <reaction evidence="1">
        <text>all-trans-retinoate + reduced [NADPH--hemoprotein reductase] + O2 = all-trans-4-hydroxyretinoate + oxidized [NADPH--hemoprotein reductase] + H2O + H(+)</text>
        <dbReference type="Rhea" id="RHEA:51984"/>
        <dbReference type="Rhea" id="RHEA-COMP:11964"/>
        <dbReference type="Rhea" id="RHEA-COMP:11965"/>
        <dbReference type="ChEBI" id="CHEBI:15377"/>
        <dbReference type="ChEBI" id="CHEBI:15378"/>
        <dbReference type="ChEBI" id="CHEBI:15379"/>
        <dbReference type="ChEBI" id="CHEBI:35291"/>
        <dbReference type="ChEBI" id="CHEBI:57618"/>
        <dbReference type="ChEBI" id="CHEBI:58210"/>
        <dbReference type="ChEBI" id="CHEBI:134178"/>
    </reaction>
    <physiologicalReaction direction="left-to-right" evidence="22">
        <dbReference type="Rhea" id="RHEA:51985"/>
    </physiologicalReaction>
</comment>
<comment type="catalytic activity">
    <reaction evidence="4">
        <text>17beta-estradiol + reduced [NADPH--hemoprotein reductase] + O2 = 16alpha,17beta-estriol + oxidized [NADPH--hemoprotein reductase] + H2O + H(+)</text>
        <dbReference type="Rhea" id="RHEA:47332"/>
        <dbReference type="Rhea" id="RHEA-COMP:11964"/>
        <dbReference type="Rhea" id="RHEA-COMP:11965"/>
        <dbReference type="ChEBI" id="CHEBI:15377"/>
        <dbReference type="ChEBI" id="CHEBI:15378"/>
        <dbReference type="ChEBI" id="CHEBI:15379"/>
        <dbReference type="ChEBI" id="CHEBI:16469"/>
        <dbReference type="ChEBI" id="CHEBI:27974"/>
        <dbReference type="ChEBI" id="CHEBI:57618"/>
        <dbReference type="ChEBI" id="CHEBI:58210"/>
    </reaction>
    <physiologicalReaction direction="left-to-right" evidence="23">
        <dbReference type="Rhea" id="RHEA:47333"/>
    </physiologicalReaction>
</comment>
<comment type="catalytic activity">
    <reaction evidence="4">
        <text>estrone + reduced [NADPH--hemoprotein reductase] + O2 = 16alpha-hydroxyestrone + oxidized [NADPH--hemoprotein reductase] + H2O + H(+)</text>
        <dbReference type="Rhea" id="RHEA:47204"/>
        <dbReference type="Rhea" id="RHEA-COMP:11964"/>
        <dbReference type="Rhea" id="RHEA-COMP:11965"/>
        <dbReference type="ChEBI" id="CHEBI:776"/>
        <dbReference type="ChEBI" id="CHEBI:15377"/>
        <dbReference type="ChEBI" id="CHEBI:15378"/>
        <dbReference type="ChEBI" id="CHEBI:15379"/>
        <dbReference type="ChEBI" id="CHEBI:17263"/>
        <dbReference type="ChEBI" id="CHEBI:57618"/>
        <dbReference type="ChEBI" id="CHEBI:58210"/>
    </reaction>
    <physiologicalReaction direction="left-to-right" evidence="23">
        <dbReference type="Rhea" id="RHEA:47205"/>
    </physiologicalReaction>
</comment>
<comment type="cofactor">
    <cofactor>
        <name>heme</name>
        <dbReference type="ChEBI" id="CHEBI:30413"/>
    </cofactor>
</comment>
<comment type="biophysicochemical properties">
    <kinetics>
        <KM evidence="1">50 uM for all-trans-retinoate (4-hydroxylation)</KM>
        <KM evidence="8">5.4 uM for (5Z,8Z,11Z,14Z,17Z)-eicosapentaenoate (epoxygenation)</KM>
        <KM evidence="8">6 uM for (5Z,8Z,11Z,14Z)-eicosatetraenoate (epoxygenation)</KM>
        <KM evidence="12">7.18 uM for paclitaxel</KM>
        <KM evidence="12">1.35 uM for amodiaquine</KM>
        <Vmax evidence="1">1211.0 pmol/min/nmol enzyme toward all-trans-retinoate (4-hydroxylation)</Vmax>
        <Vmax evidence="8">6.2 nmol/min/nmol enzyme toward (5Z,8Z,11Z,14Z,17Z)-eicosapentaenoate (epoxygenation)</Vmax>
        <Vmax evidence="8">4.6 nmol/min/nmol enzyme toward (5Z,8Z,11Z,14Z)-eicosatetraenoate (epoxygenation)</Vmax>
        <Vmax evidence="12">2.18 pmol/min/pmol enzyme toward paclitaxel</Vmax>
        <Vmax evidence="12">11.3 pmol/min/pmol enzyme toward amodiaquine</Vmax>
    </kinetics>
</comment>
<comment type="pathway">
    <text evidence="4">Steroid metabolism.</text>
</comment>
<comment type="pathway">
    <text evidence="8 9 16">Lipid metabolism; arachidonate metabolism.</text>
</comment>
<comment type="pathway">
    <text evidence="1">Cofactor metabolism; retinol metabolism.</text>
</comment>
<comment type="interaction">
    <interactant intactId="EBI-2951522">
        <id>P10632</id>
    </interactant>
    <interactant intactId="EBI-21591415">
        <id>P13473-2</id>
        <label>LAMP2</label>
    </interactant>
    <organismsDiffer>false</organismsDiffer>
    <experiments>3</experiments>
</comment>
<comment type="interaction">
    <interactant intactId="EBI-2951522">
        <id>P10632</id>
    </interactant>
    <interactant intactId="EBI-5280197">
        <id>O75400-2</id>
        <label>PRPF40A</label>
    </interactant>
    <organismsDiffer>false</organismsDiffer>
    <experiments>3</experiments>
</comment>
<comment type="interaction">
    <interactant intactId="EBI-2951522">
        <id>P10632</id>
    </interactant>
    <interactant intactId="EBI-2623095">
        <id>Q9Y371</id>
        <label>SH3GLB1</label>
    </interactant>
    <organismsDiffer>false</organismsDiffer>
    <experiments>3</experiments>
</comment>
<comment type="subcellular location">
    <subcellularLocation>
        <location>Endoplasmic reticulum membrane</location>
        <topology>Peripheral membrane protein</topology>
    </subcellularLocation>
    <subcellularLocation>
        <location>Microsome membrane</location>
        <topology>Peripheral membrane protein</topology>
    </subcellularLocation>
</comment>
<comment type="alternative products">
    <event type="alternative splicing"/>
    <isoform>
        <id>P10632-1</id>
        <name>1</name>
        <sequence type="displayed"/>
    </isoform>
    <isoform>
        <id>P10632-2</id>
        <name>2</name>
        <sequence type="described" ref="VSP_043306 VSP_043307"/>
    </isoform>
</comment>
<comment type="induction">
    <text>By phenobarbital.</text>
</comment>
<comment type="polymorphism">
    <text evidence="6 12">Several alleles are found in the human population, contributing to interindividual variations in the therapeutic efficacy and toxicity of a myriad of drugs such as paclitaxel or amodiaquine. The allele shown here is CYP2C8*1 (PubMed:26427316). CYP2C8 genetic variations are associated with altered drug metabolism and adverse drug effects including acute rhabdomyolysis after cerivastatin use [MIM:618018].</text>
</comment>
<comment type="similarity">
    <text evidence="21">Belongs to the cytochrome P450 family.</text>
</comment>
<comment type="caution">
    <text evidence="21">Alternative splicing has been shown to occur but the shorter forms are believed to be non-functional.</text>
</comment>
<comment type="online information" name="PharmVar Pharmacogen Variation Consortium">
    <link uri="https://www.pharmvar.org/gene/CYP2C8"/>
    <text>CYP2C8 alleles</text>
</comment>
<keyword id="KW-0002">3D-structure</keyword>
<keyword id="KW-0025">Alternative splicing</keyword>
<keyword id="KW-0903">Direct protein sequencing</keyword>
<keyword id="KW-0256">Endoplasmic reticulum</keyword>
<keyword id="KW-0349">Heme</keyword>
<keyword id="KW-0408">Iron</keyword>
<keyword id="KW-0443">Lipid metabolism</keyword>
<keyword id="KW-0472">Membrane</keyword>
<keyword id="KW-0479">Metal-binding</keyword>
<keyword id="KW-0492">Microsome</keyword>
<keyword id="KW-0503">Monooxygenase</keyword>
<keyword id="KW-0560">Oxidoreductase</keyword>
<keyword id="KW-0597">Phosphoprotein</keyword>
<keyword id="KW-1267">Proteomics identification</keyword>
<keyword id="KW-1185">Reference proteome</keyword>
<keyword id="KW-0753">Steroid metabolism</keyword>
<reference key="1">
    <citation type="journal article" date="1987" name="J. Biol. Chem.">
        <title>Characterization of multiple human cytochrome P-450 1 cDNAs. The chromosomal localization of the gene and evidence for alternate RNA splicing.</title>
        <authorList>
            <person name="Okino S.T."/>
            <person name="Quattrochi L.C."/>
            <person name="Pendurthi U.R."/>
            <person name="McBride O.W."/>
            <person name="Tukey R.H."/>
        </authorList>
    </citation>
    <scope>NUCLEOTIDE SEQUENCE [MRNA] (ISOFORM 1)</scope>
    <scope>VARIANT MET-264</scope>
    <source>
        <tissue>Liver</tissue>
    </source>
</reference>
<reference key="2">
    <citation type="journal article" date="1987" name="Nucleic Acids Res.">
        <title>cDNA and amino acid sequences of two members of the human P450IIC gene subfamily.</title>
        <authorList>
            <person name="Kimura S."/>
            <person name="Pastewka J."/>
            <person name="Gelboin H.V."/>
            <person name="Gonzalez F.J."/>
        </authorList>
    </citation>
    <scope>NUCLEOTIDE SEQUENCE [MRNA] (ISOFORM 1)</scope>
    <source>
        <tissue>Liver</tissue>
    </source>
</reference>
<reference key="3">
    <citation type="journal article" date="1991" name="Biochemistry">
        <title>Cloning and expression of complementary DNAs for multiple members of the human cytochrome P450IIC subfamily.</title>
        <authorList>
            <person name="Romkes M."/>
            <person name="Faletto M.B."/>
            <person name="Blaisdell J.A."/>
            <person name="Raucy J.L."/>
            <person name="Goldstein J.A."/>
        </authorList>
    </citation>
    <scope>NUCLEOTIDE SEQUENCE [MRNA] (ISOFORM 1)</scope>
    <scope>VARIANT MET-264</scope>
</reference>
<reference key="4">
    <citation type="journal article" date="2004" name="Nat. Genet.">
        <title>Complete sequencing and characterization of 21,243 full-length human cDNAs.</title>
        <authorList>
            <person name="Ota T."/>
            <person name="Suzuki Y."/>
            <person name="Nishikawa T."/>
            <person name="Otsuki T."/>
            <person name="Sugiyama T."/>
            <person name="Irie R."/>
            <person name="Wakamatsu A."/>
            <person name="Hayashi K."/>
            <person name="Sato H."/>
            <person name="Nagai K."/>
            <person name="Kimura K."/>
            <person name="Makita H."/>
            <person name="Sekine M."/>
            <person name="Obayashi M."/>
            <person name="Nishi T."/>
            <person name="Shibahara T."/>
            <person name="Tanaka T."/>
            <person name="Ishii S."/>
            <person name="Yamamoto J."/>
            <person name="Saito K."/>
            <person name="Kawai Y."/>
            <person name="Isono Y."/>
            <person name="Nakamura Y."/>
            <person name="Nagahari K."/>
            <person name="Murakami K."/>
            <person name="Yasuda T."/>
            <person name="Iwayanagi T."/>
            <person name="Wagatsuma M."/>
            <person name="Shiratori A."/>
            <person name="Sudo H."/>
            <person name="Hosoiri T."/>
            <person name="Kaku Y."/>
            <person name="Kodaira H."/>
            <person name="Kondo H."/>
            <person name="Sugawara M."/>
            <person name="Takahashi M."/>
            <person name="Kanda K."/>
            <person name="Yokoi T."/>
            <person name="Furuya T."/>
            <person name="Kikkawa E."/>
            <person name="Omura Y."/>
            <person name="Abe K."/>
            <person name="Kamihara K."/>
            <person name="Katsuta N."/>
            <person name="Sato K."/>
            <person name="Tanikawa M."/>
            <person name="Yamazaki M."/>
            <person name="Ninomiya K."/>
            <person name="Ishibashi T."/>
            <person name="Yamashita H."/>
            <person name="Murakawa K."/>
            <person name="Fujimori K."/>
            <person name="Tanai H."/>
            <person name="Kimata M."/>
            <person name="Watanabe M."/>
            <person name="Hiraoka S."/>
            <person name="Chiba Y."/>
            <person name="Ishida S."/>
            <person name="Ono Y."/>
            <person name="Takiguchi S."/>
            <person name="Watanabe S."/>
            <person name="Yosida M."/>
            <person name="Hotuta T."/>
            <person name="Kusano J."/>
            <person name="Kanehori K."/>
            <person name="Takahashi-Fujii A."/>
            <person name="Hara H."/>
            <person name="Tanase T.-O."/>
            <person name="Nomura Y."/>
            <person name="Togiya S."/>
            <person name="Komai F."/>
            <person name="Hara R."/>
            <person name="Takeuchi K."/>
            <person name="Arita M."/>
            <person name="Imose N."/>
            <person name="Musashino K."/>
            <person name="Yuuki H."/>
            <person name="Oshima A."/>
            <person name="Sasaki N."/>
            <person name="Aotsuka S."/>
            <person name="Yoshikawa Y."/>
            <person name="Matsunawa H."/>
            <person name="Ichihara T."/>
            <person name="Shiohata N."/>
            <person name="Sano S."/>
            <person name="Moriya S."/>
            <person name="Momiyama H."/>
            <person name="Satoh N."/>
            <person name="Takami S."/>
            <person name="Terashima Y."/>
            <person name="Suzuki O."/>
            <person name="Nakagawa S."/>
            <person name="Senoh A."/>
            <person name="Mizoguchi H."/>
            <person name="Goto Y."/>
            <person name="Shimizu F."/>
            <person name="Wakebe H."/>
            <person name="Hishigaki H."/>
            <person name="Watanabe T."/>
            <person name="Sugiyama A."/>
            <person name="Takemoto M."/>
            <person name="Kawakami B."/>
            <person name="Yamazaki M."/>
            <person name="Watanabe K."/>
            <person name="Kumagai A."/>
            <person name="Itakura S."/>
            <person name="Fukuzumi Y."/>
            <person name="Fujimori Y."/>
            <person name="Komiyama M."/>
            <person name="Tashiro H."/>
            <person name="Tanigami A."/>
            <person name="Fujiwara T."/>
            <person name="Ono T."/>
            <person name="Yamada K."/>
            <person name="Fujii Y."/>
            <person name="Ozaki K."/>
            <person name="Hirao M."/>
            <person name="Ohmori Y."/>
            <person name="Kawabata A."/>
            <person name="Hikiji T."/>
            <person name="Kobatake N."/>
            <person name="Inagaki H."/>
            <person name="Ikema Y."/>
            <person name="Okamoto S."/>
            <person name="Okitani R."/>
            <person name="Kawakami T."/>
            <person name="Noguchi S."/>
            <person name="Itoh T."/>
            <person name="Shigeta K."/>
            <person name="Senba T."/>
            <person name="Matsumura K."/>
            <person name="Nakajima Y."/>
            <person name="Mizuno T."/>
            <person name="Morinaga M."/>
            <person name="Sasaki M."/>
            <person name="Togashi T."/>
            <person name="Oyama M."/>
            <person name="Hata H."/>
            <person name="Watanabe M."/>
            <person name="Komatsu T."/>
            <person name="Mizushima-Sugano J."/>
            <person name="Satoh T."/>
            <person name="Shirai Y."/>
            <person name="Takahashi Y."/>
            <person name="Nakagawa K."/>
            <person name="Okumura K."/>
            <person name="Nagase T."/>
            <person name="Nomura N."/>
            <person name="Kikuchi H."/>
            <person name="Masuho Y."/>
            <person name="Yamashita R."/>
            <person name="Nakai K."/>
            <person name="Yada T."/>
            <person name="Nakamura Y."/>
            <person name="Ohara O."/>
            <person name="Isogai T."/>
            <person name="Sugano S."/>
        </authorList>
    </citation>
    <scope>NUCLEOTIDE SEQUENCE [LARGE SCALE MRNA] (ISOFORMS 1 AND 2)</scope>
    <scope>VARIANTS LYS-139 AND ARG-399</scope>
    <source>
        <tissue>Liver</tissue>
        <tissue>Mammary gland</tissue>
    </source>
</reference>
<reference key="5">
    <citation type="submission" date="2003-12" db="EMBL/GenBank/DDBJ databases">
        <authorList>
            <consortium name="NIEHS SNPs program"/>
        </authorList>
    </citation>
    <scope>NUCLEOTIDE SEQUENCE [GENOMIC DNA]</scope>
    <scope>VARIANTS LYS-139; VAL-244; MET-264; PHE-269 AND ARG-399</scope>
</reference>
<reference key="6">
    <citation type="journal article" date="2004" name="Nature">
        <title>The DNA sequence and comparative analysis of human chromosome 10.</title>
        <authorList>
            <person name="Deloukas P."/>
            <person name="Earthrowl M.E."/>
            <person name="Grafham D.V."/>
            <person name="Rubenfield M."/>
            <person name="French L."/>
            <person name="Steward C.A."/>
            <person name="Sims S.K."/>
            <person name="Jones M.C."/>
            <person name="Searle S."/>
            <person name="Scott C."/>
            <person name="Howe K."/>
            <person name="Hunt S.E."/>
            <person name="Andrews T.D."/>
            <person name="Gilbert J.G.R."/>
            <person name="Swarbreck D."/>
            <person name="Ashurst J.L."/>
            <person name="Taylor A."/>
            <person name="Battles J."/>
            <person name="Bird C.P."/>
            <person name="Ainscough R."/>
            <person name="Almeida J.P."/>
            <person name="Ashwell R.I.S."/>
            <person name="Ambrose K.D."/>
            <person name="Babbage A.K."/>
            <person name="Bagguley C.L."/>
            <person name="Bailey J."/>
            <person name="Banerjee R."/>
            <person name="Bates K."/>
            <person name="Beasley H."/>
            <person name="Bray-Allen S."/>
            <person name="Brown A.J."/>
            <person name="Brown J.Y."/>
            <person name="Burford D.C."/>
            <person name="Burrill W."/>
            <person name="Burton J."/>
            <person name="Cahill P."/>
            <person name="Camire D."/>
            <person name="Carter N.P."/>
            <person name="Chapman J.C."/>
            <person name="Clark S.Y."/>
            <person name="Clarke G."/>
            <person name="Clee C.M."/>
            <person name="Clegg S."/>
            <person name="Corby N."/>
            <person name="Coulson A."/>
            <person name="Dhami P."/>
            <person name="Dutta I."/>
            <person name="Dunn M."/>
            <person name="Faulkner L."/>
            <person name="Frankish A."/>
            <person name="Frankland J.A."/>
            <person name="Garner P."/>
            <person name="Garnett J."/>
            <person name="Gribble S."/>
            <person name="Griffiths C."/>
            <person name="Grocock R."/>
            <person name="Gustafson E."/>
            <person name="Hammond S."/>
            <person name="Harley J.L."/>
            <person name="Hart E."/>
            <person name="Heath P.D."/>
            <person name="Ho T.P."/>
            <person name="Hopkins B."/>
            <person name="Horne J."/>
            <person name="Howden P.J."/>
            <person name="Huckle E."/>
            <person name="Hynds C."/>
            <person name="Johnson C."/>
            <person name="Johnson D."/>
            <person name="Kana A."/>
            <person name="Kay M."/>
            <person name="Kimberley A.M."/>
            <person name="Kershaw J.K."/>
            <person name="Kokkinaki M."/>
            <person name="Laird G.K."/>
            <person name="Lawlor S."/>
            <person name="Lee H.M."/>
            <person name="Leongamornlert D.A."/>
            <person name="Laird G."/>
            <person name="Lloyd C."/>
            <person name="Lloyd D.M."/>
            <person name="Loveland J."/>
            <person name="Lovell J."/>
            <person name="McLaren S."/>
            <person name="McLay K.E."/>
            <person name="McMurray A."/>
            <person name="Mashreghi-Mohammadi M."/>
            <person name="Matthews L."/>
            <person name="Milne S."/>
            <person name="Nickerson T."/>
            <person name="Nguyen M."/>
            <person name="Overton-Larty E."/>
            <person name="Palmer S.A."/>
            <person name="Pearce A.V."/>
            <person name="Peck A.I."/>
            <person name="Pelan S."/>
            <person name="Phillimore B."/>
            <person name="Porter K."/>
            <person name="Rice C.M."/>
            <person name="Rogosin A."/>
            <person name="Ross M.T."/>
            <person name="Sarafidou T."/>
            <person name="Sehra H.K."/>
            <person name="Shownkeen R."/>
            <person name="Skuce C.D."/>
            <person name="Smith M."/>
            <person name="Standring L."/>
            <person name="Sycamore N."/>
            <person name="Tester J."/>
            <person name="Thorpe A."/>
            <person name="Torcasso W."/>
            <person name="Tracey A."/>
            <person name="Tromans A."/>
            <person name="Tsolas J."/>
            <person name="Wall M."/>
            <person name="Walsh J."/>
            <person name="Wang H."/>
            <person name="Weinstock K."/>
            <person name="West A.P."/>
            <person name="Willey D.L."/>
            <person name="Whitehead S.L."/>
            <person name="Wilming L."/>
            <person name="Wray P.W."/>
            <person name="Young L."/>
            <person name="Chen Y."/>
            <person name="Lovering R.C."/>
            <person name="Moschonas N.K."/>
            <person name="Siebert R."/>
            <person name="Fechtel K."/>
            <person name="Bentley D."/>
            <person name="Durbin R.M."/>
            <person name="Hubbard T."/>
            <person name="Doucette-Stamm L."/>
            <person name="Beck S."/>
            <person name="Smith D.R."/>
            <person name="Rogers J."/>
        </authorList>
    </citation>
    <scope>NUCLEOTIDE SEQUENCE [LARGE SCALE GENOMIC DNA]</scope>
</reference>
<reference key="7">
    <citation type="submission" date="2005-09" db="EMBL/GenBank/DDBJ databases">
        <authorList>
            <person name="Mural R.J."/>
            <person name="Istrail S."/>
            <person name="Sutton G.G."/>
            <person name="Florea L."/>
            <person name="Halpern A.L."/>
            <person name="Mobarry C.M."/>
            <person name="Lippert R."/>
            <person name="Walenz B."/>
            <person name="Shatkay H."/>
            <person name="Dew I."/>
            <person name="Miller J.R."/>
            <person name="Flanigan M.J."/>
            <person name="Edwards N.J."/>
            <person name="Bolanos R."/>
            <person name="Fasulo D."/>
            <person name="Halldorsson B.V."/>
            <person name="Hannenhalli S."/>
            <person name="Turner R."/>
            <person name="Yooseph S."/>
            <person name="Lu F."/>
            <person name="Nusskern D.R."/>
            <person name="Shue B.C."/>
            <person name="Zheng X.H."/>
            <person name="Zhong F."/>
            <person name="Delcher A.L."/>
            <person name="Huson D.H."/>
            <person name="Kravitz S.A."/>
            <person name="Mouchard L."/>
            <person name="Reinert K."/>
            <person name="Remington K.A."/>
            <person name="Clark A.G."/>
            <person name="Waterman M.S."/>
            <person name="Eichler E.E."/>
            <person name="Adams M.D."/>
            <person name="Hunkapiller M.W."/>
            <person name="Myers E.W."/>
            <person name="Venter J.C."/>
        </authorList>
    </citation>
    <scope>NUCLEOTIDE SEQUENCE [LARGE SCALE GENOMIC DNA]</scope>
</reference>
<reference key="8">
    <citation type="journal article" date="2004" name="Genome Res.">
        <title>The status, quality, and expansion of the NIH full-length cDNA project: the Mammalian Gene Collection (MGC).</title>
        <authorList>
            <consortium name="The MGC Project Team"/>
        </authorList>
    </citation>
    <scope>NUCLEOTIDE SEQUENCE [LARGE SCALE MRNA] (ISOFORM 1)</scope>
    <source>
        <tissue>Liver</tissue>
    </source>
</reference>
<reference key="9">
    <citation type="journal article" date="1991" name="Biochim. Biophys. Acta">
        <title>Isolation of the human cytochrome P-450 IIC8 gene: multiple glucocorticoid responsive elements in the 5' region.</title>
        <authorList>
            <person name="Ged C."/>
            <person name="Beaune P."/>
        </authorList>
    </citation>
    <scope>NUCLEOTIDE SEQUENCE [GENOMIC DNA] OF 1-56</scope>
    <source>
        <tissue>Blood</tissue>
    </source>
</reference>
<reference key="10">
    <citation type="journal article" date="1995" name="Arch. Biochem. Biophys.">
        <title>Molecular cloning, expression and characterization of an endogenous human cytochrome P450 arachidonic acid epoxygenase isoform.</title>
        <authorList>
            <person name="Zeldin D.C."/>
            <person name="DuBois R.N."/>
            <person name="Falck J.R."/>
            <person name="Capdevila J.H."/>
        </authorList>
    </citation>
    <scope>PROTEIN SEQUENCE OF 2-15</scope>
    <scope>NUCLEOTIDE SEQUENCE [MRNA] OF 6-490</scope>
    <scope>FUNCTION</scope>
    <scope>CATALYTIC ACTIVITY</scope>
    <scope>PATHWAY</scope>
    <scope>VARIANT LEU-411</scope>
    <source>
        <tissue>Kidney</tissue>
    </source>
</reference>
<reference key="11">
    <citation type="journal article" date="1988" name="Biochemistry">
        <title>Characterization of cDNAs, mRNAs, and proteins related to human liver microsomal cytochrome P-450 (S)-mephenytoin 4'-hydroxylase.</title>
        <authorList>
            <person name="Ged C."/>
            <person name="Umbenhauer D.R."/>
            <person name="Bellew T.M."/>
            <person name="Bork R.W."/>
            <person name="Srivastava P.K."/>
            <person name="Shinriki N."/>
            <person name="Lloyd R.S."/>
            <person name="Guengerich F.P."/>
        </authorList>
    </citation>
    <scope>NUCLEOTIDE SEQUENCE [MRNA] OF 11-490 (ISOFORM 1)</scope>
    <scope>VARIANTS ASP-154; LYS-193; ARG-249 AND LEU-411</scope>
    <source>
        <tissue>Liver</tissue>
    </source>
</reference>
<reference key="12">
    <citation type="journal article" date="1989" name="Ann. Hum. Genet.">
        <title>Cloning, expression and chromosomal localization of a member of the human cytochrome P450IIC gene sub-family.</title>
        <authorList>
            <person name="Shephard E.A."/>
            <person name="Phillips I.R."/>
            <person name="Santisteban I."/>
            <person name="Palmer C.N."/>
            <person name="Povey S."/>
        </authorList>
    </citation>
    <scope>NUCLEOTIDE SEQUENCE [MRNA] OF 34-382 (ISOFORM 1)</scope>
    <scope>VARIANT LYS-139</scope>
</reference>
<reference key="13">
    <citation type="journal article" date="1990" name="Nucleic Acids Res.">
        <title>Sequence of a human liver cytochrome P-450 cDNA clone.</title>
        <authorList>
            <person name="Kolyada A.Y."/>
        </authorList>
    </citation>
    <scope>NUCLEOTIDE SEQUENCE [MRNA] OF 281-490 (ISOFORM 1)</scope>
    <scope>VARIANT ARG-399</scope>
</reference>
<reference key="14">
    <citation type="journal article" date="2004" name="J. Hum. Genet.">
        <title>A frameshift variant of CYP2C8 was identified in a patient who suffered from rhabdomyolysis after administration of cerivastatin.</title>
        <authorList>
            <person name="Ishikawa C."/>
            <person name="Ozaki H."/>
            <person name="Nakajima T."/>
            <person name="Ishii T."/>
            <person name="Kanai S."/>
            <person name="Anjo S."/>
            <person name="Shirai K."/>
            <person name="Inoue I."/>
        </authorList>
    </citation>
    <scope>POLYMORPHISM</scope>
</reference>
<reference key="15">
    <citation type="journal article" date="2000" name="Mol. Pharmacol.">
        <title>Identification of human cytochrome P450s involved in the formation of all-trans-retinoic acid principal metabolites.</title>
        <authorList>
            <person name="Marill J."/>
            <person name="Cresteil T."/>
            <person name="Lanotte M."/>
            <person name="Chabot G.G."/>
        </authorList>
    </citation>
    <scope>FUNCTION</scope>
    <scope>CATALYTIC ACTIVITY</scope>
    <scope>BIOPHYSICOCHEMICAL PROPERTIES</scope>
    <scope>PATHWAY</scope>
</reference>
<reference key="16">
    <citation type="journal article" date="2003" name="Cancer Res.">
        <title>Human cytochrome P450 3A7 has a distinct high catalytic activity for the 16alpha-hydroxylation of estrone but not 17beta-estradiol.</title>
        <authorList>
            <person name="Lee A.J."/>
            <person name="Conney A.H."/>
            <person name="Zhu B.T."/>
        </authorList>
    </citation>
    <scope>FUNCTION</scope>
    <scope>CATALYTIC ACTIVITY</scope>
    <scope>PATHWAY</scope>
</reference>
<reference key="17">
    <citation type="journal article" date="2005" name="Biochem. Biophys. Res. Commun.">
        <title>Eicosapentaenoic acid metabolism by cytochrome P450 enzymes of the CYP2C subfamily.</title>
        <authorList>
            <person name="Barbosa-Sicard E."/>
            <person name="Markovic M."/>
            <person name="Honeck H."/>
            <person name="Christ B."/>
            <person name="Muller D.N."/>
            <person name="Schunck W.H."/>
        </authorList>
    </citation>
    <scope>FUNCTION</scope>
    <scope>CATALYTIC ACTIVITY</scope>
    <scope>BIOPHYSICOCHEMICAL PROPERTIES</scope>
    <scope>PATHWAY</scope>
</reference>
<reference key="18">
    <citation type="journal article" date="2010" name="J. Lipid Res.">
        <title>Stereoselective epoxidation of the last double bond of polyunsaturated fatty acids by human cytochromes P450.</title>
        <authorList>
            <person name="Lucas D."/>
            <person name="Goulitquer S."/>
            <person name="Marienhagen J."/>
            <person name="Fer M."/>
            <person name="Dreano Y."/>
            <person name="Schwaneberg U."/>
            <person name="Amet Y."/>
            <person name="Corcos L."/>
        </authorList>
    </citation>
    <scope>FUNCTION</scope>
    <scope>CATALYTIC ACTIVITY</scope>
    <scope>PATHWAY</scope>
</reference>
<reference key="19">
    <citation type="journal article" date="2014" name="J. Proteomics">
        <title>An enzyme assisted RP-RPLC approach for in-depth analysis of human liver phosphoproteome.</title>
        <authorList>
            <person name="Bian Y."/>
            <person name="Song C."/>
            <person name="Cheng K."/>
            <person name="Dong M."/>
            <person name="Wang F."/>
            <person name="Huang J."/>
            <person name="Sun D."/>
            <person name="Wang L."/>
            <person name="Ye M."/>
            <person name="Zou H."/>
        </authorList>
    </citation>
    <scope>PHOSPHORYLATION [LARGE SCALE ANALYSIS] AT SER-100</scope>
    <scope>IDENTIFICATION BY MASS SPECTROMETRY [LARGE SCALE ANALYSIS]</scope>
    <source>
        <tissue>Liver</tissue>
    </source>
</reference>
<reference key="20">
    <citation type="journal article" date="2004" name="J. Biol. Chem.">
        <title>Structure of human microsomal cytochrome P450 2C8. Evidence for a peripheral fatty acid binding site.</title>
        <authorList>
            <person name="Schoch G.A."/>
            <person name="Yano J.K."/>
            <person name="Wester M.R."/>
            <person name="Griffin K.J."/>
            <person name="Stout C.D."/>
            <person name="Johnson E.F."/>
        </authorList>
    </citation>
    <scope>X-RAY CRYSTALLOGRAPHY (2.7 ANGSTROMS) OF 28-490</scope>
</reference>
<reference key="21">
    <citation type="journal article" date="2008" name="J. Biol. Chem.">
        <title>Determinants of cytochrome P450 2C8 substrate binding: structures of complexes with montelukast, troglitazone, felodipine, and 9-cis-retinoic acid.</title>
        <authorList>
            <person name="Schoch G.A."/>
            <person name="Yano J.K."/>
            <person name="Sansen S."/>
            <person name="Dansette P.M."/>
            <person name="Stout C.D."/>
            <person name="Johnson E.F."/>
        </authorList>
    </citation>
    <scope>X-RAY CRYSTALLOGRAPHY (2.28 ANGSTROMS) OF 28-490 IN COMPLEX WITH INHIBITORS</scope>
    <scope>SUBSTRATE-BINDING SITES</scope>
</reference>
<reference key="22">
    <citation type="journal article" date="2001" name="Pharmacogenetics">
        <title>Polymorphisms in human CYP2C8 decrease metabolism of the anticancer drug paclitaxel and arachidonic acid.</title>
        <authorList>
            <person name="Dai D."/>
            <person name="Zeldin D.C."/>
            <person name="Blaisdell J.A."/>
            <person name="Chanas B."/>
            <person name="Coulter S.J."/>
            <person name="Ghanayem B.I."/>
            <person name="Goldstein J.A."/>
        </authorList>
    </citation>
    <scope>VARIANTS LYS-139; PHE-269 AND ARG-399</scope>
</reference>
<reference key="23">
    <citation type="journal article" date="2002" name="Biochem. Pharmacol.">
        <title>CYP2C8 polymorphisms in Caucasians and their relationship with paclitaxel 6alpha-hydroxylase activity in human liver microsomes.</title>
        <authorList>
            <person name="Bahadur N."/>
            <person name="Leathart J.B."/>
            <person name="Mutch E."/>
            <person name="Steimel-Crespi D."/>
            <person name="Dunn S.A."/>
            <person name="Gilissen R."/>
            <person name="Houdt J.V."/>
            <person name="Hendrickx J."/>
            <person name="Mannens G."/>
            <person name="Bohets H."/>
            <person name="Williams F.M."/>
            <person name="Armstrong M."/>
            <person name="Crespi C.L."/>
            <person name="Daly A.K."/>
        </authorList>
    </citation>
    <scope>VARIANTS LYS-139; MET-264; PHE-269; SER-390 AND ARG-399</scope>
</reference>
<reference key="24">
    <citation type="journal article" date="2004" name="Pharmacogenomics">
        <title>Genetic variation in eleven phase I drug metabolism genes in an ethnically diverse population.</title>
        <authorList>
            <person name="Solus J.F."/>
            <person name="Arietta B.J."/>
            <person name="Harris J.R."/>
            <person name="Sexton D.P."/>
            <person name="Steward J.Q."/>
            <person name="McMunn C."/>
            <person name="Ihrie P."/>
            <person name="Mehall J.M."/>
            <person name="Edwards T.L."/>
            <person name="Dawson E.P."/>
        </authorList>
    </citation>
    <scope>VARIANTS LYS-139; MET-264; PHE-269 AND ARG-399</scope>
</reference>
<reference key="25">
    <citation type="journal article" date="2015" name="Drug Metab. Pharmacokinet.">
        <title>Functional characterization of 12 allelic variants of CYP2C8 by assessment of paclitaxel 6alpha-hydroxylation and amodiaquine N-deethylation.</title>
        <authorList>
            <person name="Tsukada C."/>
            <person name="Saito T."/>
            <person name="Maekawa M."/>
            <person name="Mano N."/>
            <person name="Oda A."/>
            <person name="Hirasawa N."/>
            <person name="Hiratsuka M."/>
        </authorList>
    </citation>
    <scope>CHARACTERIZATION OF VARIANTS LYS-139; SER-171; GLY-186; MET-223; PRO-238; ARG-247; MET-264; PHE-269; ASN-383; ARG-399 AND VAL-461 DEL</scope>
    <scope>FUNCTION</scope>
    <scope>BIOPHYSICOCHEMICAL PROPERTIES</scope>
    <scope>POLYMORPHISM</scope>
</reference>
<accession>P10632</accession>
<accession>A8K9N8</accession>
<accession>B0AZN2</accession>
<accession>B7Z1F6</accession>
<accession>Q5VX93</accession>
<accession>Q8WWB1</accession>
<accession>Q9UCZ9</accession>
<gene>
    <name evidence="20 27" type="primary">CYP2C8</name>
</gene>
<proteinExistence type="evidence at protein level"/>